<proteinExistence type="evidence at protein level"/>
<gene>
    <name type="primary">TRIO</name>
</gene>
<comment type="function">
    <text evidence="2 11 14 18 19 20">Guanine nucleotide exchange factor (GEF) for RHOA and RAC1 GTPases (PubMed:22155786, PubMed:27418539, PubMed:8643598). Involved in coordinating actin remodeling, which is necessary for cell migration and growth (PubMed:10341202, PubMed:22155786). Plays a key role in the regulation of neurite outgrowth and lamellipodia formation (PubMed:32109419). In developing hippocampal neurons, limits dendrite formation, without affecting the establishment of axon polarity. Once dendrites are formed, involved in the control of synaptic function by regulating the endocytosis of AMPA-selective glutamate receptors (AMPARs) at CA1 excitatory synapses (By similarity). May act as a regulator of adipogenesis (By similarity).</text>
</comment>
<comment type="catalytic activity">
    <reaction>
        <text>L-seryl-[protein] + ATP = O-phospho-L-seryl-[protein] + ADP + H(+)</text>
        <dbReference type="Rhea" id="RHEA:17989"/>
        <dbReference type="Rhea" id="RHEA-COMP:9863"/>
        <dbReference type="Rhea" id="RHEA-COMP:11604"/>
        <dbReference type="ChEBI" id="CHEBI:15378"/>
        <dbReference type="ChEBI" id="CHEBI:29999"/>
        <dbReference type="ChEBI" id="CHEBI:30616"/>
        <dbReference type="ChEBI" id="CHEBI:83421"/>
        <dbReference type="ChEBI" id="CHEBI:456216"/>
        <dbReference type="EC" id="2.7.11.1"/>
    </reaction>
</comment>
<comment type="catalytic activity">
    <reaction>
        <text>L-threonyl-[protein] + ATP = O-phospho-L-threonyl-[protein] + ADP + H(+)</text>
        <dbReference type="Rhea" id="RHEA:46608"/>
        <dbReference type="Rhea" id="RHEA-COMP:11060"/>
        <dbReference type="Rhea" id="RHEA-COMP:11605"/>
        <dbReference type="ChEBI" id="CHEBI:15378"/>
        <dbReference type="ChEBI" id="CHEBI:30013"/>
        <dbReference type="ChEBI" id="CHEBI:30616"/>
        <dbReference type="ChEBI" id="CHEBI:61977"/>
        <dbReference type="ChEBI" id="CHEBI:456216"/>
        <dbReference type="EC" id="2.7.11.1"/>
    </reaction>
</comment>
<comment type="subunit">
    <text evidence="2 13 14 15 20">Interacts with CARMIL1 (PubMed:19846667). Interacts with PTPRF/LAR (PubMed:8643598). Interacts with ANKRD26 (PubMed:22666460). Interacts with Bassoon/BSN and Piccolo/PCLO (By similarity). Interacts with the cytoplasmic region of the heterodimer formed by NGFR and SORCS2. ProNGF binding mediates dissociation of TRIO from the receptor complex (PubMed:22155786).</text>
</comment>
<comment type="interaction">
    <interactant intactId="EBI-718519">
        <id>O75962</id>
    </interactant>
    <interactant intactId="EBI-529989">
        <id>Q9NRI5</id>
        <label>DISC1</label>
    </interactant>
    <organismsDiffer>false</organismsDiffer>
    <experiments>3</experiments>
</comment>
<comment type="interaction">
    <interactant intactId="EBI-15915736">
        <id>O75962-4</id>
    </interactant>
    <interactant intactId="EBI-7212896">
        <id>P63000-1</id>
        <label>RAC1</label>
    </interactant>
    <organismsDiffer>false</organismsDiffer>
    <experiments>2</experiments>
</comment>
<comment type="interaction">
    <interactant intactId="EBI-15915736">
        <id>O75962-4</id>
    </interactant>
    <interactant intactId="EBI-15881527">
        <id>Q811T9-1</id>
        <label>Disc1</label>
    </interactant>
    <organismsDiffer>true</organismsDiffer>
    <experiments>2</experiments>
</comment>
<comment type="subcellular location">
    <subcellularLocation>
        <location evidence="27">Cytoplasm</location>
    </subcellularLocation>
    <subcellularLocation>
        <location evidence="3">Cell projection</location>
    </subcellularLocation>
</comment>
<comment type="alternative products">
    <event type="alternative splicing"/>
    <isoform>
        <id>O75962-1</id>
        <name>1</name>
        <sequence type="displayed"/>
    </isoform>
    <isoform>
        <id>O75962-2</id>
        <name>2</name>
        <sequence type="described" ref="VSP_004467 VSP_004468"/>
    </isoform>
    <isoform>
        <id>O75962-3</id>
        <name>3</name>
        <sequence type="described" ref="VSP_023306 VSP_023307"/>
    </isoform>
    <isoform>
        <id>O75962-4</id>
        <name>4</name>
        <sequence type="described" ref="VSP_037860"/>
    </isoform>
    <isoform>
        <id>O75962-5</id>
        <name>5</name>
        <sequence type="described" ref="VSP_037861 VSP_037862"/>
    </isoform>
</comment>
<comment type="tissue specificity">
    <text evidence="20">Widely expressed, with highest levels in heart, skeletal muscle, and brain.</text>
</comment>
<comment type="domain">
    <text>The N-terminal DBL/GEF domain specifically catalyzes nucleotide exchange for RAC1, leading to the activation of Jun kinase and the production of membrane ruffles. The second DBL/GEF domain is an exchange factor for rhoa and induces the formation of stress fibers.</text>
</comment>
<comment type="PTM">
    <text>Phosphorylated on serine residue(s).</text>
</comment>
<comment type="disease" evidence="17 18 19">
    <disease id="DI-04798">
        <name>Intellectual developmental disorder, autosomal dominant 44, with microcephaly</name>
        <acronym>MRD44</acronym>
        <description>A disorder characterized by developmental delay, variable intellectual disability, distinctive facial features, and abnormalities of the fingers. Most patients also have microcephaly.</description>
        <dbReference type="MIM" id="617061"/>
    </disease>
    <text>The disease may be caused by variants affecting the gene represented in this entry.</text>
</comment>
<comment type="disease" evidence="18 19">
    <disease id="DI-05777">
        <name>Intellectual developmental disorder, autosomal dominant 63, with macrocephaly</name>
        <acronym>MRD63</acronym>
        <description>An autosomal dominant form of intellectual disability, a disorder characterized by significantly below average general intellectual functioning associated with impairments in adaptive behavior and manifested during the developmental period. MRD63 is characterized by moderate to severe impaired intellectual development with poor or absent speech, global developmental delay, and variable behavioral abnormalities. Variable dysmorphic features are preset in half of the patients.</description>
        <dbReference type="MIM" id="618825"/>
    </disease>
    <text>The disease is caused by variants affecting the gene represented in this entry.</text>
</comment>
<comment type="similarity">
    <text evidence="26">Belongs to the protein kinase superfamily. CAMK Ser/Thr protein kinase family.</text>
</comment>
<comment type="sequence caution" evidence="26">
    <conflict type="erroneous initiation">
        <sequence resource="EMBL-CDS" id="AAC34245"/>
    </conflict>
    <text>Truncated N-terminus.</text>
</comment>
<comment type="sequence caution" evidence="26">
    <conflict type="frameshift">
        <sequence resource="EMBL-CDS" id="AAC34245"/>
    </conflict>
</comment>
<comment type="sequence caution" evidence="26">
    <conflict type="erroneous initiation">
        <sequence resource="EMBL-CDS" id="AAC43042"/>
    </conflict>
    <text>Truncated N-terminus.</text>
</comment>
<comment type="sequence caution" evidence="26">
    <molecule>Isoform 2</molecule>
    <conflict type="frameshift">
        <sequence resource="EMBL-CDS" id="AAC34245"/>
    </conflict>
</comment>
<comment type="online information" name="Atlas of Genetics and Cytogenetics in Oncology and Haematology">
    <link uri="https://atlasgeneticsoncology.org/gene/43542/TRIO"/>
</comment>
<accession>O75962</accession>
<accession>D3DTD1</accession>
<accession>Q13458</accession>
<accession>Q59EQ7</accession>
<accession>Q6PJC9</accession>
<accession>Q6ZN05</accession>
<accession>Q8IWK8</accession>
<organism>
    <name type="scientific">Homo sapiens</name>
    <name type="common">Human</name>
    <dbReference type="NCBI Taxonomy" id="9606"/>
    <lineage>
        <taxon>Eukaryota</taxon>
        <taxon>Metazoa</taxon>
        <taxon>Chordata</taxon>
        <taxon>Craniata</taxon>
        <taxon>Vertebrata</taxon>
        <taxon>Euteleostomi</taxon>
        <taxon>Mammalia</taxon>
        <taxon>Eutheria</taxon>
        <taxon>Euarchontoglires</taxon>
        <taxon>Primates</taxon>
        <taxon>Haplorrhini</taxon>
        <taxon>Catarrhini</taxon>
        <taxon>Hominidae</taxon>
        <taxon>Homo</taxon>
    </lineage>
</organism>
<name>TRIO_HUMAN</name>
<reference key="1">
    <citation type="journal article" date="2004" name="Nat. Genet.">
        <title>Complete sequencing and characterization of 21,243 full-length human cDNAs.</title>
        <authorList>
            <person name="Ota T."/>
            <person name="Suzuki Y."/>
            <person name="Nishikawa T."/>
            <person name="Otsuki T."/>
            <person name="Sugiyama T."/>
            <person name="Irie R."/>
            <person name="Wakamatsu A."/>
            <person name="Hayashi K."/>
            <person name="Sato H."/>
            <person name="Nagai K."/>
            <person name="Kimura K."/>
            <person name="Makita H."/>
            <person name="Sekine M."/>
            <person name="Obayashi M."/>
            <person name="Nishi T."/>
            <person name="Shibahara T."/>
            <person name="Tanaka T."/>
            <person name="Ishii S."/>
            <person name="Yamamoto J."/>
            <person name="Saito K."/>
            <person name="Kawai Y."/>
            <person name="Isono Y."/>
            <person name="Nakamura Y."/>
            <person name="Nagahari K."/>
            <person name="Murakami K."/>
            <person name="Yasuda T."/>
            <person name="Iwayanagi T."/>
            <person name="Wagatsuma M."/>
            <person name="Shiratori A."/>
            <person name="Sudo H."/>
            <person name="Hosoiri T."/>
            <person name="Kaku Y."/>
            <person name="Kodaira H."/>
            <person name="Kondo H."/>
            <person name="Sugawara M."/>
            <person name="Takahashi M."/>
            <person name="Kanda K."/>
            <person name="Yokoi T."/>
            <person name="Furuya T."/>
            <person name="Kikkawa E."/>
            <person name="Omura Y."/>
            <person name="Abe K."/>
            <person name="Kamihara K."/>
            <person name="Katsuta N."/>
            <person name="Sato K."/>
            <person name="Tanikawa M."/>
            <person name="Yamazaki M."/>
            <person name="Ninomiya K."/>
            <person name="Ishibashi T."/>
            <person name="Yamashita H."/>
            <person name="Murakawa K."/>
            <person name="Fujimori K."/>
            <person name="Tanai H."/>
            <person name="Kimata M."/>
            <person name="Watanabe M."/>
            <person name="Hiraoka S."/>
            <person name="Chiba Y."/>
            <person name="Ishida S."/>
            <person name="Ono Y."/>
            <person name="Takiguchi S."/>
            <person name="Watanabe S."/>
            <person name="Yosida M."/>
            <person name="Hotuta T."/>
            <person name="Kusano J."/>
            <person name="Kanehori K."/>
            <person name="Takahashi-Fujii A."/>
            <person name="Hara H."/>
            <person name="Tanase T.-O."/>
            <person name="Nomura Y."/>
            <person name="Togiya S."/>
            <person name="Komai F."/>
            <person name="Hara R."/>
            <person name="Takeuchi K."/>
            <person name="Arita M."/>
            <person name="Imose N."/>
            <person name="Musashino K."/>
            <person name="Yuuki H."/>
            <person name="Oshima A."/>
            <person name="Sasaki N."/>
            <person name="Aotsuka S."/>
            <person name="Yoshikawa Y."/>
            <person name="Matsunawa H."/>
            <person name="Ichihara T."/>
            <person name="Shiohata N."/>
            <person name="Sano S."/>
            <person name="Moriya S."/>
            <person name="Momiyama H."/>
            <person name="Satoh N."/>
            <person name="Takami S."/>
            <person name="Terashima Y."/>
            <person name="Suzuki O."/>
            <person name="Nakagawa S."/>
            <person name="Senoh A."/>
            <person name="Mizoguchi H."/>
            <person name="Goto Y."/>
            <person name="Shimizu F."/>
            <person name="Wakebe H."/>
            <person name="Hishigaki H."/>
            <person name="Watanabe T."/>
            <person name="Sugiyama A."/>
            <person name="Takemoto M."/>
            <person name="Kawakami B."/>
            <person name="Yamazaki M."/>
            <person name="Watanabe K."/>
            <person name="Kumagai A."/>
            <person name="Itakura S."/>
            <person name="Fukuzumi Y."/>
            <person name="Fujimori Y."/>
            <person name="Komiyama M."/>
            <person name="Tashiro H."/>
            <person name="Tanigami A."/>
            <person name="Fujiwara T."/>
            <person name="Ono T."/>
            <person name="Yamada K."/>
            <person name="Fujii Y."/>
            <person name="Ozaki K."/>
            <person name="Hirao M."/>
            <person name="Ohmori Y."/>
            <person name="Kawabata A."/>
            <person name="Hikiji T."/>
            <person name="Kobatake N."/>
            <person name="Inagaki H."/>
            <person name="Ikema Y."/>
            <person name="Okamoto S."/>
            <person name="Okitani R."/>
            <person name="Kawakami T."/>
            <person name="Noguchi S."/>
            <person name="Itoh T."/>
            <person name="Shigeta K."/>
            <person name="Senba T."/>
            <person name="Matsumura K."/>
            <person name="Nakajima Y."/>
            <person name="Mizuno T."/>
            <person name="Morinaga M."/>
            <person name="Sasaki M."/>
            <person name="Togashi T."/>
            <person name="Oyama M."/>
            <person name="Hata H."/>
            <person name="Watanabe M."/>
            <person name="Komatsu T."/>
            <person name="Mizushima-Sugano J."/>
            <person name="Satoh T."/>
            <person name="Shirai Y."/>
            <person name="Takahashi Y."/>
            <person name="Nakagawa K."/>
            <person name="Okumura K."/>
            <person name="Nagase T."/>
            <person name="Nomura N."/>
            <person name="Kikuchi H."/>
            <person name="Masuho Y."/>
            <person name="Yamashita R."/>
            <person name="Nakai K."/>
            <person name="Yada T."/>
            <person name="Nakamura Y."/>
            <person name="Ohara O."/>
            <person name="Isogai T."/>
            <person name="Sugano S."/>
        </authorList>
    </citation>
    <scope>NUCLEOTIDE SEQUENCE [LARGE SCALE MRNA] (ISOFORM 3)</scope>
    <source>
        <tissue>Brain</tissue>
    </source>
</reference>
<reference key="2">
    <citation type="journal article" date="2004" name="Nature">
        <title>The DNA sequence and comparative analysis of human chromosome 5.</title>
        <authorList>
            <person name="Schmutz J."/>
            <person name="Martin J."/>
            <person name="Terry A."/>
            <person name="Couronne O."/>
            <person name="Grimwood J."/>
            <person name="Lowry S."/>
            <person name="Gordon L.A."/>
            <person name="Scott D."/>
            <person name="Xie G."/>
            <person name="Huang W."/>
            <person name="Hellsten U."/>
            <person name="Tran-Gyamfi M."/>
            <person name="She X."/>
            <person name="Prabhakar S."/>
            <person name="Aerts A."/>
            <person name="Altherr M."/>
            <person name="Bajorek E."/>
            <person name="Black S."/>
            <person name="Branscomb E."/>
            <person name="Caoile C."/>
            <person name="Challacombe J.F."/>
            <person name="Chan Y.M."/>
            <person name="Denys M."/>
            <person name="Detter J.C."/>
            <person name="Escobar J."/>
            <person name="Flowers D."/>
            <person name="Fotopulos D."/>
            <person name="Glavina T."/>
            <person name="Gomez M."/>
            <person name="Gonzales E."/>
            <person name="Goodstein D."/>
            <person name="Grigoriev I."/>
            <person name="Groza M."/>
            <person name="Hammon N."/>
            <person name="Hawkins T."/>
            <person name="Haydu L."/>
            <person name="Israni S."/>
            <person name="Jett J."/>
            <person name="Kadner K."/>
            <person name="Kimball H."/>
            <person name="Kobayashi A."/>
            <person name="Lopez F."/>
            <person name="Lou Y."/>
            <person name="Martinez D."/>
            <person name="Medina C."/>
            <person name="Morgan J."/>
            <person name="Nandkeshwar R."/>
            <person name="Noonan J.P."/>
            <person name="Pitluck S."/>
            <person name="Pollard M."/>
            <person name="Predki P."/>
            <person name="Priest J."/>
            <person name="Ramirez L."/>
            <person name="Retterer J."/>
            <person name="Rodriguez A."/>
            <person name="Rogers S."/>
            <person name="Salamov A."/>
            <person name="Salazar A."/>
            <person name="Thayer N."/>
            <person name="Tice H."/>
            <person name="Tsai M."/>
            <person name="Ustaszewska A."/>
            <person name="Vo N."/>
            <person name="Wheeler J."/>
            <person name="Wu K."/>
            <person name="Yang J."/>
            <person name="Dickson M."/>
            <person name="Cheng J.-F."/>
            <person name="Eichler E.E."/>
            <person name="Olsen A."/>
            <person name="Pennacchio L.A."/>
            <person name="Rokhsar D.S."/>
            <person name="Richardson P."/>
            <person name="Lucas S.M."/>
            <person name="Myers R.M."/>
            <person name="Rubin E.M."/>
        </authorList>
    </citation>
    <scope>NUCLEOTIDE SEQUENCE [LARGE SCALE GENOMIC DNA]</scope>
</reference>
<reference key="3">
    <citation type="submission" date="2005-09" db="EMBL/GenBank/DDBJ databases">
        <authorList>
            <person name="Mural R.J."/>
            <person name="Istrail S."/>
            <person name="Sutton G.G."/>
            <person name="Florea L."/>
            <person name="Halpern A.L."/>
            <person name="Mobarry C.M."/>
            <person name="Lippert R."/>
            <person name="Walenz B."/>
            <person name="Shatkay H."/>
            <person name="Dew I."/>
            <person name="Miller J.R."/>
            <person name="Flanigan M.J."/>
            <person name="Edwards N.J."/>
            <person name="Bolanos R."/>
            <person name="Fasulo D."/>
            <person name="Halldorsson B.V."/>
            <person name="Hannenhalli S."/>
            <person name="Turner R."/>
            <person name="Yooseph S."/>
            <person name="Lu F."/>
            <person name="Nusskern D.R."/>
            <person name="Shue B.C."/>
            <person name="Zheng X.H."/>
            <person name="Zhong F."/>
            <person name="Delcher A.L."/>
            <person name="Huson D.H."/>
            <person name="Kravitz S.A."/>
            <person name="Mouchard L."/>
            <person name="Reinert K."/>
            <person name="Remington K.A."/>
            <person name="Clark A.G."/>
            <person name="Waterman M.S."/>
            <person name="Eichler E.E."/>
            <person name="Adams M.D."/>
            <person name="Hunkapiller M.W."/>
            <person name="Myers E.W."/>
            <person name="Venter J.C."/>
        </authorList>
    </citation>
    <scope>NUCLEOTIDE SEQUENCE [LARGE SCALE GENOMIC DNA]</scope>
</reference>
<reference key="4">
    <citation type="journal article" date="2004" name="Genome Res.">
        <title>The status, quality, and expansion of the NIH full-length cDNA project: the Mammalian Gene Collection (MGC).</title>
        <authorList>
            <consortium name="The MGC Project Team"/>
        </authorList>
    </citation>
    <scope>NUCLEOTIDE SEQUENCE [LARGE SCALE MRNA] OF 1-1686 (ISOFORM 4)</scope>
    <scope>NUCLEOTIDE SEQUENCE [LARGE SCALE MRNA] OF 2715-3097 (ISOFORM 1)</scope>
    <source>
        <tissue>Kidney</tissue>
        <tissue>Lymph</tissue>
    </source>
</reference>
<reference key="5">
    <citation type="journal article" date="1996" name="Proc. Natl. Acad. Sci. U.S.A.">
        <title>The multidomain protein Trio binds the LAR transmembrane tyrosine phosphatase, contains a protein kinase domain, and has separate rac-specific and rho-specific guanine nucleotide exchange factor domains.</title>
        <authorList>
            <person name="Debant A."/>
            <person name="Serra-Pages C."/>
            <person name="Seipel K."/>
            <person name="O'Brien S."/>
            <person name="Tang M."/>
            <person name="Park S.-H."/>
            <person name="Streuli M."/>
        </authorList>
    </citation>
    <scope>NUCLEOTIDE SEQUENCE [MRNA] OF 38-3097 (ISOFORM 2)</scope>
    <scope>FUNCTION</scope>
    <scope>INTERACTION WITH PTPRF</scope>
    <scope>TISSUE SPECIFICITY</scope>
    <source>
        <tissue>Fibroblast</tissue>
    </source>
</reference>
<reference key="6">
    <citation type="submission" date="1998-09" db="EMBL/GenBank/DDBJ databases">
        <authorList>
            <person name="Streuli M."/>
        </authorList>
    </citation>
    <scope>NUCLEOTIDE SEQUENCE [MRNA] OF 38-3097 (ISOFORM 1)</scope>
</reference>
<reference key="7">
    <citation type="submission" date="2005-03" db="EMBL/GenBank/DDBJ databases">
        <authorList>
            <person name="Totoki Y."/>
            <person name="Toyoda A."/>
            <person name="Takeda T."/>
            <person name="Sakaki Y."/>
            <person name="Tanaka A."/>
            <person name="Yokoyama S."/>
            <person name="Ohara O."/>
            <person name="Nagase T."/>
            <person name="Kikuno R.F."/>
        </authorList>
    </citation>
    <scope>NUCLEOTIDE SEQUENCE [LARGE SCALE MRNA] OF 362-3097 (ISOFORM 5)</scope>
    <source>
        <tissue>Brain</tissue>
    </source>
</reference>
<reference key="8">
    <citation type="journal article" date="1999" name="J. Cell Sci.">
        <title>Trio amino-terminal guanine nucleotide exchange factor domain expression promotes actin cytoskeleton reorganization, cell migration and anchorage-independent cell growth.</title>
        <authorList>
            <person name="Seipel K."/>
            <person name="Medley Q.G."/>
            <person name="Kedersha N.L."/>
            <person name="Zhang X.A."/>
            <person name="O'Brien S.P."/>
            <person name="Serra-Pages C."/>
            <person name="Hemler M.E."/>
            <person name="Streuli M."/>
        </authorList>
    </citation>
    <scope>FUNCTION</scope>
</reference>
<reference key="9">
    <citation type="journal article" date="2006" name="Cell">
        <title>Global, in vivo, and site-specific phosphorylation dynamics in signaling networks.</title>
        <authorList>
            <person name="Olsen J.V."/>
            <person name="Blagoev B."/>
            <person name="Gnad F."/>
            <person name="Macek B."/>
            <person name="Kumar C."/>
            <person name="Mortensen P."/>
            <person name="Mann M."/>
        </authorList>
    </citation>
    <scope>IDENTIFICATION BY MASS SPECTROMETRY [LARGE SCALE ANALYSIS]</scope>
    <source>
        <tissue>Cervix carcinoma</tissue>
    </source>
</reference>
<reference key="10">
    <citation type="journal article" date="2008" name="Proc. Natl. Acad. Sci. U.S.A.">
        <title>A quantitative atlas of mitotic phosphorylation.</title>
        <authorList>
            <person name="Dephoure N."/>
            <person name="Zhou C."/>
            <person name="Villen J."/>
            <person name="Beausoleil S.A."/>
            <person name="Bakalarski C.E."/>
            <person name="Elledge S.J."/>
            <person name="Gygi S.P."/>
        </authorList>
    </citation>
    <scope>PHOSPHORYLATION [LARGE SCALE ANALYSIS] AT SER-2282 AND SER-2455</scope>
    <scope>IDENTIFICATION BY MASS SPECTROMETRY [LARGE SCALE ANALYSIS]</scope>
    <source>
        <tissue>Cervix carcinoma</tissue>
    </source>
</reference>
<reference key="11">
    <citation type="journal article" date="2009" name="Anal. Chem.">
        <title>Lys-N and trypsin cover complementary parts of the phosphoproteome in a refined SCX-based approach.</title>
        <authorList>
            <person name="Gauci S."/>
            <person name="Helbig A.O."/>
            <person name="Slijper M."/>
            <person name="Krijgsveld J."/>
            <person name="Heck A.J."/>
            <person name="Mohammed S."/>
        </authorList>
    </citation>
    <scope>IDENTIFICATION BY MASS SPECTROMETRY [LARGE SCALE ANALYSIS]</scope>
</reference>
<reference key="12">
    <citation type="journal article" date="2009" name="Mol. Biol. Cell">
        <title>Distinct roles for CARMIL isoforms in cell migration.</title>
        <authorList>
            <person name="Liang Y."/>
            <person name="Niederstrasser H."/>
            <person name="Edwards M."/>
            <person name="Jackson C.E."/>
            <person name="Cooper J.A."/>
        </authorList>
    </citation>
    <scope>INTERACTION WITH CARMIL1</scope>
</reference>
<reference key="13">
    <citation type="journal article" date="2009" name="Sci. Signal.">
        <title>Quantitative phosphoproteomic analysis of T cell receptor signaling reveals system-wide modulation of protein-protein interactions.</title>
        <authorList>
            <person name="Mayya V."/>
            <person name="Lundgren D.H."/>
            <person name="Hwang S.-I."/>
            <person name="Rezaul K."/>
            <person name="Wu L."/>
            <person name="Eng J.K."/>
            <person name="Rodionov V."/>
            <person name="Han D.K."/>
        </authorList>
    </citation>
    <scope>IDENTIFICATION BY MASS SPECTROMETRY [LARGE SCALE ANALYSIS]</scope>
    <source>
        <tissue>Leukemic T-cell</tissue>
    </source>
</reference>
<reference key="14">
    <citation type="journal article" date="2010" name="Sci. Signal.">
        <title>Quantitative phosphoproteomics reveals widespread full phosphorylation site occupancy during mitosis.</title>
        <authorList>
            <person name="Olsen J.V."/>
            <person name="Vermeulen M."/>
            <person name="Santamaria A."/>
            <person name="Kumar C."/>
            <person name="Miller M.L."/>
            <person name="Jensen L.J."/>
            <person name="Gnad F."/>
            <person name="Cox J."/>
            <person name="Jensen T.S."/>
            <person name="Nigg E.A."/>
            <person name="Brunak S."/>
            <person name="Mann M."/>
        </authorList>
    </citation>
    <scope>PHOSPHORYLATION [LARGE SCALE ANALYSIS] AT SER-2455 AND SER-2459</scope>
    <scope>IDENTIFICATION BY MASS SPECTROMETRY [LARGE SCALE ANALYSIS]</scope>
    <source>
        <tissue>Cervix carcinoma</tissue>
    </source>
</reference>
<reference key="15">
    <citation type="journal article" date="2011" name="BMC Syst. Biol.">
        <title>Initial characterization of the human central proteome.</title>
        <authorList>
            <person name="Burkard T.R."/>
            <person name="Planyavsky M."/>
            <person name="Kaupe I."/>
            <person name="Breitwieser F.P."/>
            <person name="Buerckstuemmer T."/>
            <person name="Bennett K.L."/>
            <person name="Superti-Furga G."/>
            <person name="Colinge J."/>
        </authorList>
    </citation>
    <scope>IDENTIFICATION BY MASS SPECTROMETRY [LARGE SCALE ANALYSIS]</scope>
</reference>
<reference key="16">
    <citation type="journal article" date="2011" name="Sci. Signal.">
        <title>Neuronal growth cone retraction relies on proneurotrophin receptor signaling through Rac.</title>
        <authorList>
            <person name="Deinhardt K."/>
            <person name="Kim T."/>
            <person name="Spellman D.S."/>
            <person name="Mains R.E."/>
            <person name="Eipper B.A."/>
            <person name="Neubert T.A."/>
            <person name="Chao M.V."/>
            <person name="Hempstead B.L."/>
        </authorList>
    </citation>
    <scope>FUNCTION</scope>
    <scope>SUBCELLULAR LOCATION</scope>
    <scope>INTERACTION WITH SORCS2 AND NGFR</scope>
    <scope>MUTAGENESIS OF LYS-2917</scope>
    <scope>IDENTIFICATION BY MASS SPECTROMETRY</scope>
</reference>
<reference key="17">
    <citation type="journal article" date="2012" name="PLoS ONE">
        <title>ANKRD26 and its interacting partners TRIO, GPS2, HMMR and DIPA regulate adipogenesis in 3T3-L1 cells.</title>
        <authorList>
            <person name="Liu X.F."/>
            <person name="Bera T.K."/>
            <person name="Kahue C."/>
            <person name="Escobar T."/>
            <person name="Fei Z."/>
            <person name="Raciti G.A."/>
            <person name="Pastan I."/>
        </authorList>
    </citation>
    <scope>INTERACTION WITH ANKRD26</scope>
</reference>
<reference key="18">
    <citation type="journal article" date="2013" name="J. Proteome Res.">
        <title>Toward a comprehensive characterization of a human cancer cell phosphoproteome.</title>
        <authorList>
            <person name="Zhou H."/>
            <person name="Di Palma S."/>
            <person name="Preisinger C."/>
            <person name="Peng M."/>
            <person name="Polat A.N."/>
            <person name="Heck A.J."/>
            <person name="Mohammed S."/>
        </authorList>
    </citation>
    <scope>PHOSPHORYLATION [LARGE SCALE ANALYSIS] AT SER-2455; SER-2459 AND SER-2631</scope>
    <scope>IDENTIFICATION BY MASS SPECTROMETRY [LARGE SCALE ANALYSIS]</scope>
    <source>
        <tissue>Cervix carcinoma</tissue>
    </source>
</reference>
<reference key="19">
    <citation type="journal article" date="2016" name="Hum. Mol. Genet.">
        <title>TRIO loss of function is associated with mild intellectual disability and affects dendritic branching and synapse function.</title>
        <authorList>
            <person name="Ba W."/>
            <person name="Yan Y."/>
            <person name="Reijnders M.R."/>
            <person name="Schuurs-Hoeijmakers J.H."/>
            <person name="Feenstra I."/>
            <person name="Bongers E.M."/>
            <person name="Bosch D.G."/>
            <person name="De Leeuw N."/>
            <person name="Pfundt R."/>
            <person name="Gilissen C."/>
            <person name="De Vries P.F."/>
            <person name="Veltman J.A."/>
            <person name="Hoischen A."/>
            <person name="Mefford H.C."/>
            <person name="Eichler E.E."/>
            <person name="Vissers L.E."/>
            <person name="Nadif Kasri N."/>
            <person name="De Vries B.B."/>
        </authorList>
    </citation>
    <scope>INVOLVEMENT IN MRD44</scope>
    <scope>VARIANTS MRD44 SER-924; HIS-1238; THR-1922; ASN-1939; VAL-2201; ASP-2247 AND GLN-2707</scope>
</reference>
<reference key="20">
    <citation type="journal article" date="2016" name="J. Med. Genet.">
        <title>Mutations specific to the Rac-GEF domain of TRIO cause intellectual disability and microcephaly.</title>
        <authorList>
            <person name="Pengelly R.J."/>
            <person name="Greville-Heygate S."/>
            <person name="Schmidt S."/>
            <person name="Seaby E.G."/>
            <person name="Jabalameli M.R."/>
            <person name="Mehta S.G."/>
            <person name="Parker M.J."/>
            <person name="Goudie D."/>
            <person name="Fagotto-Kaufmann C."/>
            <person name="Mercer C."/>
            <person name="Debant A."/>
            <person name="Ennis S."/>
            <person name="Baralle D."/>
        </authorList>
    </citation>
    <scope>INVOLVEMENT IN MRD44</scope>
    <scope>VARIANTS MRD44 GLN-1428 AND THR-1461</scope>
    <scope>VARIANT MRD63 ILE-1080</scope>
    <scope>CHARACTERIZATION OF VARIANT MRD44 GLN-1428</scope>
    <scope>FUNCTION</scope>
</reference>
<reference key="21">
    <citation type="journal article" date="1998" name="Cell">
        <title>NMR structure and mutagenesis of the N-terminal Dbl homology domain of the nucleotide exchange factor Trio.</title>
        <authorList>
            <person name="Liu X."/>
            <person name="Wang H."/>
            <person name="Eberstadt M."/>
            <person name="Schnuchel A."/>
            <person name="Olejniczak E.T."/>
            <person name="Meadows R.P."/>
            <person name="Schkeryantz J.M."/>
            <person name="Janowick D.A."/>
            <person name="Harlan J.E."/>
            <person name="Harris E.A.S."/>
            <person name="Staunton D.E."/>
            <person name="Fesik S.W."/>
        </authorList>
    </citation>
    <scope>STRUCTURE BY NMR OF 1286-1466</scope>
    <scope>MUTAGENESIS</scope>
</reference>
<reference key="22">
    <citation type="journal article" date="2007" name="Nature">
        <title>Patterns of somatic mutation in human cancer genomes.</title>
        <authorList>
            <person name="Greenman C."/>
            <person name="Stephens P."/>
            <person name="Smith R."/>
            <person name="Dalgliesh G.L."/>
            <person name="Hunter C."/>
            <person name="Bignell G."/>
            <person name="Davies H."/>
            <person name="Teague J."/>
            <person name="Butler A."/>
            <person name="Stevens C."/>
            <person name="Edkins S."/>
            <person name="O'Meara S."/>
            <person name="Vastrik I."/>
            <person name="Schmidt E.E."/>
            <person name="Avis T."/>
            <person name="Barthorpe S."/>
            <person name="Bhamra G."/>
            <person name="Buck G."/>
            <person name="Choudhury B."/>
            <person name="Clements J."/>
            <person name="Cole J."/>
            <person name="Dicks E."/>
            <person name="Forbes S."/>
            <person name="Gray K."/>
            <person name="Halliday K."/>
            <person name="Harrison R."/>
            <person name="Hills K."/>
            <person name="Hinton J."/>
            <person name="Jenkinson A."/>
            <person name="Jones D."/>
            <person name="Menzies A."/>
            <person name="Mironenko T."/>
            <person name="Perry J."/>
            <person name="Raine K."/>
            <person name="Richardson D."/>
            <person name="Shepherd R."/>
            <person name="Small A."/>
            <person name="Tofts C."/>
            <person name="Varian J."/>
            <person name="Webb T."/>
            <person name="West S."/>
            <person name="Widaa S."/>
            <person name="Yates A."/>
            <person name="Cahill D.P."/>
            <person name="Louis D.N."/>
            <person name="Goldstraw P."/>
            <person name="Nicholson A.G."/>
            <person name="Brasseur F."/>
            <person name="Looijenga L."/>
            <person name="Weber B.L."/>
            <person name="Chiew Y.-E."/>
            <person name="DeFazio A."/>
            <person name="Greaves M.F."/>
            <person name="Green A.R."/>
            <person name="Campbell P."/>
            <person name="Birney E."/>
            <person name="Easton D.F."/>
            <person name="Chenevix-Trench G."/>
            <person name="Tan M.-H."/>
            <person name="Khoo S.K."/>
            <person name="Teh B.T."/>
            <person name="Yuen S.T."/>
            <person name="Leung S.Y."/>
            <person name="Wooster R."/>
            <person name="Futreal P.A."/>
            <person name="Stratton M.R."/>
        </authorList>
    </citation>
    <scope>VARIANTS [LARGE SCALE ANALYSIS] THR-291; MET-1644; ARG-1690; MET-1978 AND MET-2242</scope>
</reference>
<reference key="23">
    <citation type="journal article" date="2012" name="N. Engl. J. Med.">
        <title>Diagnostic exome sequencing in persons with severe intellectual disability.</title>
        <authorList>
            <person name="de Ligt J."/>
            <person name="Willemsen M.H."/>
            <person name="van Bon B.W."/>
            <person name="Kleefstra T."/>
            <person name="Yntema H.G."/>
            <person name="Kroes T."/>
            <person name="Vulto-van Silfhout A.T."/>
            <person name="Koolen D.A."/>
            <person name="de Vries P."/>
            <person name="Gilissen C."/>
            <person name="del Rosario M."/>
            <person name="Hoischen A."/>
            <person name="Scheffer H."/>
            <person name="de Vries B.B."/>
            <person name="Brunner H.G."/>
            <person name="Veltman J.A."/>
            <person name="Vissers L.E."/>
        </authorList>
    </citation>
    <scope>VARIANTS VAL-1368 AND MET-2563</scope>
</reference>
<reference key="24">
    <citation type="journal article" date="2020" name="Am. J. Hum. Genet.">
        <title>Opposite modulation of RAC1 by mutations in TRIO is associated with distinct, domain-specific neurodevelopmental disorders.</title>
        <authorList>
            <consortium name="C4RCD Research Group"/>
            <person name="Barbosa S."/>
            <person name="Greville-Heygate S."/>
            <person name="Bonnet M."/>
            <person name="Godwin A."/>
            <person name="Fagotto-Kaufmann C."/>
            <person name="Kajava A.V."/>
            <person name="Laouteouet D."/>
            <person name="Mawby R."/>
            <person name="Wai H.A."/>
            <person name="Dingemans A.J.M."/>
            <person name="Hehir-Kwa J."/>
            <person name="Willems M."/>
            <person name="Capri Y."/>
            <person name="Mehta S.G."/>
            <person name="Cox H."/>
            <person name="Goudie D."/>
            <person name="Vansenne F."/>
            <person name="Turnpenny P."/>
            <person name="Vincent M."/>
            <person name="Cogne B."/>
            <person name="Lesca G."/>
            <person name="Hertecant J."/>
            <person name="Rodriguez D."/>
            <person name="Keren B."/>
            <person name="Burglen L."/>
            <person name="Gerard M."/>
            <person name="Putoux A."/>
            <person name="Cantagrel V."/>
            <person name="Siquier-Pernet K."/>
            <person name="Rio M."/>
            <person name="Banka S."/>
            <person name="Sarkar A."/>
            <person name="Steeves M."/>
            <person name="Parker M."/>
            <person name="Clement E."/>
            <person name="Moutton S."/>
            <person name="Tran Mau-Them F."/>
            <person name="Piton A."/>
            <person name="de Vries B.B.A."/>
            <person name="Guille M."/>
            <person name="Debant A."/>
            <person name="Schmidt S."/>
            <person name="Baralle D."/>
        </authorList>
    </citation>
    <scope>VARIANTS MRD44 768-GLN--VAL-3097 DEL; LYS-1299; GLN-1428; THR-1461 AND ARG-1469</scope>
    <scope>VARIANTS MRD63 ILE-1075; GLN-1078; GLY-1078; TRP-1078; ILE-1080 AND LEU-1461</scope>
    <scope>INVOLVEMENT IN MRD63</scope>
    <scope>FUNCTION</scope>
    <scope>CHARACTERIZATION OF VARIANTS MRD63 ILE-1075; GLN-1078; GLY-1078; TRP-1078; ILE-1080 AND LEU-1461</scope>
    <scope>CHARACTERIZATION OF VARIANTS MRD44 LYS-1299; GLN-1428 AND ARG-1469</scope>
</reference>
<evidence type="ECO:0000250" key="1"/>
<evidence type="ECO:0000250" key="2">
    <source>
        <dbReference type="UniProtKB" id="F1M0Z1"/>
    </source>
</evidence>
<evidence type="ECO:0000250" key="3">
    <source>
        <dbReference type="UniProtKB" id="Q0KL02"/>
    </source>
</evidence>
<evidence type="ECO:0000255" key="4">
    <source>
        <dbReference type="PROSITE-ProRule" id="PRU00056"/>
    </source>
</evidence>
<evidence type="ECO:0000255" key="5">
    <source>
        <dbReference type="PROSITE-ProRule" id="PRU00062"/>
    </source>
</evidence>
<evidence type="ECO:0000255" key="6">
    <source>
        <dbReference type="PROSITE-ProRule" id="PRU00114"/>
    </source>
</evidence>
<evidence type="ECO:0000255" key="7">
    <source>
        <dbReference type="PROSITE-ProRule" id="PRU00145"/>
    </source>
</evidence>
<evidence type="ECO:0000255" key="8">
    <source>
        <dbReference type="PROSITE-ProRule" id="PRU00159"/>
    </source>
</evidence>
<evidence type="ECO:0000255" key="9">
    <source>
        <dbReference type="PROSITE-ProRule" id="PRU00192"/>
    </source>
</evidence>
<evidence type="ECO:0000256" key="10">
    <source>
        <dbReference type="SAM" id="MobiDB-lite"/>
    </source>
</evidence>
<evidence type="ECO:0000269" key="11">
    <source>
    </source>
</evidence>
<evidence type="ECO:0000269" key="12">
    <source>
    </source>
</evidence>
<evidence type="ECO:0000269" key="13">
    <source>
    </source>
</evidence>
<evidence type="ECO:0000269" key="14">
    <source>
    </source>
</evidence>
<evidence type="ECO:0000269" key="15">
    <source>
    </source>
</evidence>
<evidence type="ECO:0000269" key="16">
    <source>
    </source>
</evidence>
<evidence type="ECO:0000269" key="17">
    <source>
    </source>
</evidence>
<evidence type="ECO:0000269" key="18">
    <source>
    </source>
</evidence>
<evidence type="ECO:0000269" key="19">
    <source>
    </source>
</evidence>
<evidence type="ECO:0000269" key="20">
    <source>
    </source>
</evidence>
<evidence type="ECO:0000269" key="21">
    <source>
    </source>
</evidence>
<evidence type="ECO:0000303" key="22">
    <source>
    </source>
</evidence>
<evidence type="ECO:0000303" key="23">
    <source>
    </source>
</evidence>
<evidence type="ECO:0000303" key="24">
    <source>
    </source>
</evidence>
<evidence type="ECO:0000303" key="25">
    <source ref="7"/>
</evidence>
<evidence type="ECO:0000305" key="26"/>
<evidence type="ECO:0000305" key="27">
    <source>
    </source>
</evidence>
<evidence type="ECO:0007744" key="28">
    <source>
    </source>
</evidence>
<evidence type="ECO:0007744" key="29">
    <source>
    </source>
</evidence>
<evidence type="ECO:0007744" key="30">
    <source>
    </source>
</evidence>
<evidence type="ECO:0007829" key="31">
    <source>
        <dbReference type="PDB" id="1NTY"/>
    </source>
</evidence>
<evidence type="ECO:0007829" key="32">
    <source>
        <dbReference type="PDB" id="2NZ8"/>
    </source>
</evidence>
<evidence type="ECO:0007829" key="33">
    <source>
        <dbReference type="PDB" id="6D8Z"/>
    </source>
</evidence>
<sequence length="3097" mass="346900">MSGSSGGAAAPAASSGPAAAASAAGSGCGGGAGEGAEEAAKDLADIAAFFRSGFRKNDEMKAMDVLPILKEKVAYLSGGRDKRGGPILTFPARSNHDRIRQEDLRRLISYLACIPSEEVCKRGFTVIVDMRGSKWDSIKPLLKILQESFPCCIHVALIIKPDNFWQKQRTNFGSSKFEFETNMVSLEGLTKVVDPSQLTPEFDGCLEYNHEEWIEIRVAFEDYISNATHMLSRLEELQDILAKKELPQDLEGARNMIEEHSQLKKKVIKAPIEDLDLEGQKLLQRIQSSESFPKKNSGSGNADLQNLLPKVSTMLDRLHSTRQHLHQMWHVRKLKLDQCFQLRLFEQDAEKMFDWITHNKGLFLNSYTEIGTSHPHAMELQTQHNHFAMNCMNVYVNINRIMSVANRLVESGHYASQQIRQIASQLEQEWKAFAAALDERSTLLDMSSIFHQKAEKYMSNVDSWCKACGEVDLPSELQDLEDAIHHHQGIYEHITLAYSEVSQDGKSLLDKLQRPLTPGSSDSLTASANYSKAVHHVLDVIHEVLHHQRQLENIWQHRKVRLHQRLQLCVFQQDVQQVLDWIENHGEAFLSKHTGVGKSLHRARALQKRHEDFEEVAQNTYTNADKLLEAAEQLAQTGECDPEEIYQAAHQLEDRIQDFVRRVEQRKILLDMSVSFHTHVKELWTWLEELQKELLDDVYAESVEAVQDLIKRFGQQQQTTLQVTVNVIKEGEDLIQQLRDSAISSNKTPHNSSINHIETVLQQLDEAQSQMEELFQERKIKLELFLQLRIFERDAIDIISDLESWNDELSQQMNDFDTEDLTIAEQRLQHHADKALTMNNLTFDVIHQGQDLLQYVNEVQASGVELLCDRDVDMATRVQDLLEFLHEKQQELDLAAEQHRKHLEQCVQLRHLQAEVKQVLGWIRNGESMLNAGLITASSLQEAEQLQREHEQFQHAIEKTHQSALQVQQKAEAMLQANHYDMDMIRDCAEKVASHWQQLMLKMEDRLKLVNASVAFYKTSEQVCSVLESLEQEYKREEDWCGGADKLGPNSETDHVTPMISKHLEQKEAFLKACTLARRNADVFLKYLHRNSVNMPGMVTHIKAPEQQVKNILNELFQRENRVLHYWTMRKRRLDQCQQYVVFERSAKQALEWIHDNGEFYLSTHTSTGSSIQHTQELLKEHEEFQITAKQTKERVKLLIQLADGFCEKGHAHAAEIKKCVTAVDKRYRDFSLRMEKYRTSLEKALGISSDSNKSSKSLQLDIIPASIPGSEVKLRDAAHELNEEKRKSARRKEFIMAELIQTEKAYVRDLRECMDTYLWEMTSGVEEIPPGIVNKELIIFGNMQEIYEFHNNIFLKELEKYEQLPEDVGHCFVTWADKFQMYVTYCKNKPDSTQLILEHAGSYFDEIQQRHGLANSISSYLIKPVQRITKYQLLLKELLTCCEEGKGEIKDGLEVMLSVPKRANDAMHLSMLEGFDENIESQGELILQESFQVWDPKTLIRKGRERHLFLFEMSLVFSKEVKDSSGRSKYLYKSKLFTSELGVTEHVEGDPCKFALWVGRTPTSDNKIVLKASSIENKQDWIKHIREVIQERTIHLKGALKEPIHIPKTAPATRQKGRRDGEDLDSQGDGSSQPDTISIASRTSQNTLDSDKLSGGCELTVVIHDFTACNSNELTIRRGQTVEVLERPHDKPDWCLVRTTDRSPAAEGLVPCGSLCIAHSRSSMEMEGIFNHKDSLSVSSNDASPPASVASLQPHMIGAQSSPGPKRPGNTLRKWLTSPVRRLSSGKADGHVKKLAHKHKKSREVRKSADAGSQKDSDDSAATPQDETVEERGRNEGLSSGTLSKSSSSGMQSCGEEEGEEGADAVPLPPPMAIQQHSLLQPDSQDDKASSRLLVRPTSSETPSAAELVSAIEELVKSKMALEDRPSSLLVDQGDSSSPSFNPSDNSLLSSSSPIDEMEERKSSSLKRRHYVLQELVETERDYVRDLGYVVEGYMALMKEDGVPDDMKGKDKIVFGNIHQIYDWHRDFFLGELEKCLEDPEKLGSLFVKHERRLHMYIAYCQNKPKSEHIVSEYIDTFFEDLKQRLGHRLQLTDLLIKPVQRIMKYQLLLKDFLKYSKKASLDTSELERAVEVMCIVPRRCNDMMNVGRLQGFDGKIVAQGKLLLQDTFLVTDQDAGLLPRCRERRIFLFEQIVIFSEPLDKKKGFSMPGFLFKNSIKVSCLCLEENVENDPCKFALTSRTGDVVETFILHSSSPSVRQTWIHEINQILENQRNFLNALTSPIEYQRNHSGGGGGGGSGGSGGGGGSGGGGAPSGGSGHSGGPSSCGGAPSTSRSRPSRIPQPVRHHPPVLVSSAASSQAEADKMSGTSTPGPSLPPPGAAPEAGPSAPSRRPPGADAEGSEREAEPIPKMKVLESPRKGAANASGSSPDAPAKDARASLGTLPLGKPRAGAASPLNSPLSSAVPSLGKEPFPPSSPLQKGGSFWSSIPASPASRPGSFTFPGDSDSLQRQTPRHAAPGKDTDRMSTCSSASEQSVQSTQSNGSESSSSSNISTMLVTHDYTAVKEDEINVYQGEVVQILASNQQNMFLVFRAATDQCPAAEGWIPGFVLGHTSAVIVENPDGTLKKSTSWHTALRLRKKSEKKDKDGKREGKLENGYRKSREGLSNKVSVKLLNPNYIYDVPPEFVIPLSEVTCETGETVVLRCRVCGRPKASITWKGPEHNTLNNDGHYSISYSDLGEATLKIVGVTTEDDGIYTCIAVNDMGSASSSASLRVLGPGMDGIMVTWKDNFDSFYSEVAELGRGRFSVVKKCDQKGTKRAVATKFVNKKLMKRDQVTHELGILQSLQHPLLVGLLDTFETPTSYILVLEMADQGRLLDCVVRWGSLTEGKIRAHLGEVLEAVRYLHNCRIAHLDLKPENILVDESLAKPTIKLADFGDAVQLNTTYYIHQLLGNPEFAAPEIILGNPVSLTSDTWSVGVLTYVLLSGVSPFLDDSVEETCLNICRLDFSFPDDYFKGVSQKAKEFVCFLLQEDPAKRPSAALALQEQWLQAGNGRSTGVLDTSRLTSFIERRKHQNDVRPIRSIKNFLQSRLLPRV</sequence>
<keyword id="KW-0002">3D-structure</keyword>
<keyword id="KW-0025">Alternative splicing</keyword>
<keyword id="KW-0067">ATP-binding</keyword>
<keyword id="KW-0966">Cell projection</keyword>
<keyword id="KW-0963">Cytoplasm</keyword>
<keyword id="KW-0225">Disease variant</keyword>
<keyword id="KW-1015">Disulfide bond</keyword>
<keyword id="KW-0344">Guanine-nucleotide releasing factor</keyword>
<keyword id="KW-0393">Immunoglobulin domain</keyword>
<keyword id="KW-0991">Intellectual disability</keyword>
<keyword id="KW-0418">Kinase</keyword>
<keyword id="KW-0547">Nucleotide-binding</keyword>
<keyword id="KW-0597">Phosphoprotein</keyword>
<keyword id="KW-1267">Proteomics identification</keyword>
<keyword id="KW-1185">Reference proteome</keyword>
<keyword id="KW-0677">Repeat</keyword>
<keyword id="KW-0723">Serine/threonine-protein kinase</keyword>
<keyword id="KW-0728">SH3 domain</keyword>
<keyword id="KW-0808">Transferase</keyword>
<feature type="chain" id="PRO_0000080978" description="Triple functional domain protein">
    <location>
        <begin position="1"/>
        <end position="3097"/>
    </location>
</feature>
<feature type="domain" description="CRAL-TRIO" evidence="4">
    <location>
        <begin position="65"/>
        <end position="210"/>
    </location>
</feature>
<feature type="repeat" description="Spectrin 1">
    <location>
        <begin position="311"/>
        <end position="418"/>
    </location>
</feature>
<feature type="repeat" description="Spectrin 2">
    <location>
        <begin position="538"/>
        <end position="644"/>
    </location>
</feature>
<feature type="repeat" description="Spectrin 3">
    <location>
        <begin position="878"/>
        <end position="984"/>
    </location>
</feature>
<feature type="repeat" description="Spectrin 4">
    <location>
        <begin position="1109"/>
        <end position="1216"/>
    </location>
</feature>
<feature type="domain" description="DH 1" evidence="5">
    <location>
        <begin position="1292"/>
        <end position="1467"/>
    </location>
</feature>
<feature type="domain" description="PH 1" evidence="7">
    <location>
        <begin position="1480"/>
        <end position="1591"/>
    </location>
</feature>
<feature type="domain" description="SH3 1" evidence="9">
    <location>
        <begin position="1656"/>
        <end position="1721"/>
    </location>
</feature>
<feature type="domain" description="DH 2" evidence="5">
    <location>
        <begin position="1969"/>
        <end position="2145"/>
    </location>
</feature>
<feature type="domain" description="PH 2" evidence="7">
    <location>
        <begin position="2157"/>
        <end position="2271"/>
    </location>
</feature>
<feature type="domain" description="SH3 2" evidence="9">
    <location>
        <begin position="2551"/>
        <end position="2616"/>
    </location>
</feature>
<feature type="domain" description="Ig-like C2-type">
    <location>
        <begin position="2685"/>
        <end position="2775"/>
    </location>
</feature>
<feature type="domain" description="Protein kinase" evidence="8">
    <location>
        <begin position="2796"/>
        <end position="3052"/>
    </location>
</feature>
<feature type="region of interest" description="Disordered" evidence="10">
    <location>
        <begin position="1601"/>
        <end position="1650"/>
    </location>
</feature>
<feature type="region of interest" description="Disordered" evidence="10">
    <location>
        <begin position="1779"/>
        <end position="1906"/>
    </location>
</feature>
<feature type="region of interest" description="Disordered" evidence="10">
    <location>
        <begin position="1927"/>
        <end position="1965"/>
    </location>
</feature>
<feature type="region of interest" description="Disordered" evidence="10">
    <location>
        <begin position="2287"/>
        <end position="2552"/>
    </location>
</feature>
<feature type="region of interest" description="Disordered" evidence="10">
    <location>
        <begin position="2639"/>
        <end position="2660"/>
    </location>
</feature>
<feature type="compositionally biased region" description="Polar residues" evidence="10">
    <location>
        <begin position="1629"/>
        <end position="1649"/>
    </location>
</feature>
<feature type="compositionally biased region" description="Basic residues" evidence="10">
    <location>
        <begin position="1794"/>
        <end position="1805"/>
    </location>
</feature>
<feature type="compositionally biased region" description="Basic and acidic residues" evidence="10">
    <location>
        <begin position="1806"/>
        <end position="1819"/>
    </location>
</feature>
<feature type="compositionally biased region" description="Low complexity" evidence="10">
    <location>
        <begin position="1837"/>
        <end position="1855"/>
    </location>
</feature>
<feature type="compositionally biased region" description="Low complexity" evidence="10">
    <location>
        <begin position="1936"/>
        <end position="1954"/>
    </location>
</feature>
<feature type="compositionally biased region" description="Gly residues" evidence="10">
    <location>
        <begin position="2291"/>
        <end position="2326"/>
    </location>
</feature>
<feature type="compositionally biased region" description="Low complexity" evidence="10">
    <location>
        <begin position="2327"/>
        <end position="2344"/>
    </location>
</feature>
<feature type="compositionally biased region" description="Low complexity" evidence="10">
    <location>
        <begin position="2382"/>
        <end position="2397"/>
    </location>
</feature>
<feature type="compositionally biased region" description="Basic and acidic residues" evidence="10">
    <location>
        <begin position="2401"/>
        <end position="2419"/>
    </location>
</feature>
<feature type="compositionally biased region" description="Low complexity" evidence="10">
    <location>
        <begin position="2453"/>
        <end position="2468"/>
    </location>
</feature>
<feature type="compositionally biased region" description="Polar residues" evidence="10">
    <location>
        <begin position="2526"/>
        <end position="2535"/>
    </location>
</feature>
<feature type="compositionally biased region" description="Low complexity" evidence="10">
    <location>
        <begin position="2536"/>
        <end position="2552"/>
    </location>
</feature>
<feature type="compositionally biased region" description="Basic and acidic residues" evidence="10">
    <location>
        <begin position="2643"/>
        <end position="2660"/>
    </location>
</feature>
<feature type="active site" evidence="1">
    <location>
        <position position="2915"/>
    </location>
</feature>
<feature type="binding site" evidence="8">
    <location>
        <begin position="2802"/>
        <end position="2810"/>
    </location>
    <ligand>
        <name>ATP</name>
        <dbReference type="ChEBI" id="CHEBI:30616"/>
    </ligand>
</feature>
<feature type="binding site" evidence="8">
    <location>
        <position position="2825"/>
    </location>
    <ligand>
        <name>ATP</name>
        <dbReference type="ChEBI" id="CHEBI:30616"/>
    </ligand>
</feature>
<feature type="modified residue" description="Phosphoserine" evidence="3">
    <location>
        <position position="1627"/>
    </location>
</feature>
<feature type="modified residue" description="Phosphoserine" evidence="2">
    <location>
        <position position="1632"/>
    </location>
</feature>
<feature type="modified residue" description="Phosphoserine" evidence="2">
    <location>
        <position position="1633"/>
    </location>
</feature>
<feature type="modified residue" description="Phosphothreonine" evidence="2">
    <location>
        <position position="1824"/>
    </location>
</feature>
<feature type="modified residue" description="Phosphoserine" evidence="28">
    <location>
        <position position="2282"/>
    </location>
</feature>
<feature type="modified residue" description="Phosphoserine" evidence="28 29 30">
    <location>
        <position position="2455"/>
    </location>
</feature>
<feature type="modified residue" description="Phosphoserine" evidence="29 30">
    <location>
        <position position="2459"/>
    </location>
</feature>
<feature type="modified residue" description="Phosphoserine" evidence="30">
    <location>
        <position position="2631"/>
    </location>
</feature>
<feature type="disulfide bond" evidence="6">
    <location>
        <begin position="2696"/>
        <end position="2759"/>
    </location>
</feature>
<feature type="splice variant" id="VSP_023306" description="In isoform 3." evidence="22">
    <location>
        <begin position="1"/>
        <end position="2501"/>
    </location>
</feature>
<feature type="splice variant" id="VSP_037860" description="In isoform 4." evidence="23">
    <location>
        <begin position="1"/>
        <end position="59"/>
    </location>
</feature>
<feature type="splice variant" id="VSP_004467" description="In isoform 2." evidence="24">
    <original>G</original>
    <variation>E</variation>
    <location>
        <position position="2368"/>
    </location>
</feature>
<feature type="splice variant" id="VSP_004468" description="In isoform 2." evidence="24">
    <location>
        <begin position="2369"/>
        <end position="2544"/>
    </location>
</feature>
<feature type="splice variant" id="VSP_023307" description="In isoform 3." evidence="22">
    <original>FPGDSDSLQRQTPRHAAPGKDTDRMSTCSSASEQSVQSTQSNG</original>
    <variation>MLPSQAQGLLWWVFPLFPASSLSYPPVSYRADGLARNTFLKAC</variation>
    <location>
        <begin position="2502"/>
        <end position="2544"/>
    </location>
</feature>
<feature type="splice variant" id="VSP_037861" description="In isoform 5." evidence="25">
    <original>SESSSSSNISTMLVTHDYT</original>
    <variation>VSASGGPRPPAPLPLSRQL</variation>
    <location>
        <begin position="2545"/>
        <end position="2563"/>
    </location>
</feature>
<feature type="splice variant" id="VSP_037862" description="In isoform 5." evidence="25">
    <location>
        <begin position="2564"/>
        <end position="3097"/>
    </location>
</feature>
<feature type="sequence variant" id="VAR_041899" description="In dbSNP:rs55772118." evidence="12">
    <original>S</original>
    <variation>T</variation>
    <location>
        <position position="291"/>
    </location>
</feature>
<feature type="sequence variant" id="VAR_059802" description="In dbSNP:rs16903367.">
    <original>D</original>
    <variation>E</variation>
    <location>
        <position position="348"/>
    </location>
</feature>
<feature type="sequence variant" id="VAR_083915" description="In MRD44." evidence="19">
    <location>
        <begin position="768"/>
        <end position="3097"/>
    </location>
</feature>
<feature type="sequence variant" id="VAR_077093" description="In MRD44; uncertain significance; dbSNP:rs772072746." evidence="17">
    <original>R</original>
    <variation>S</variation>
    <location>
        <position position="924"/>
    </location>
</feature>
<feature type="sequence variant" id="VAR_083916" description="In MRD63; slightly increased occipitofrontal circumference; increased activation of RAC1-mediated signaling; increased lamellipodia formation; dbSNP:rs1745368018." evidence="19">
    <original>T</original>
    <variation>I</variation>
    <location>
        <position position="1075"/>
    </location>
</feature>
<feature type="sequence variant" id="VAR_083917" description="In MRD63; increased activation of RAC1-mediated signaling; increased neurite outgrowth; dbSNP:rs1554065887." evidence="19">
    <original>R</original>
    <variation>G</variation>
    <location>
        <position position="1078"/>
    </location>
</feature>
<feature type="sequence variant" id="VAR_083918" description="In MRD63; increased activation of RAC1-mediated signaling; increased neurite outgrowth; dbSNP:rs1745369142." evidence="19">
    <original>R</original>
    <variation>Q</variation>
    <location>
        <position position="1078"/>
    </location>
</feature>
<feature type="sequence variant" id="VAR_083919" description="In MRD63; increased activation of RAC1-mediated signaling; increased neurite outgrowth; dbSNP:rs1554065887." evidence="19">
    <original>R</original>
    <variation>W</variation>
    <location>
        <position position="1078"/>
    </location>
</feature>
<feature type="sequence variant" id="VAR_077094" description="In MRD63; slightly increased occipitofrontal circumference; increased activation of RAC1-mediated signaling; increased neurite outgrowth; dbSNP:rs879255628." evidence="18 19">
    <original>N</original>
    <variation>I</variation>
    <location>
        <position position="1080"/>
    </location>
</feature>
<feature type="sequence variant" id="VAR_077095" description="In MRD44; uncertain significance; dbSNP:rs756004023." evidence="17">
    <original>Y</original>
    <variation>H</variation>
    <location>
        <position position="1238"/>
    </location>
</feature>
<feature type="sequence variant" id="VAR_083920" description="In MRD44; severely decreased activation of RAC1-mediated signaling; severely decreased neurite outgrowth; dbSNP:rs1746763024." evidence="19">
    <original>E</original>
    <variation>K</variation>
    <location>
        <position position="1299"/>
    </location>
</feature>
<feature type="sequence variant" id="VAR_069371" description="Found in patient with severe intellectual disability; uncertain significance." evidence="16">
    <original>D</original>
    <variation>V</variation>
    <location>
        <position position="1368"/>
    </location>
</feature>
<feature type="sequence variant" id="VAR_077096" description="In MRD44; severely decreased activation of RAC1-mediated signaling; severely decreased neurite outgrowth; dbSNP:rs879255626." evidence="18 19">
    <original>R</original>
    <variation>Q</variation>
    <location>
        <position position="1428"/>
    </location>
</feature>
<feature type="sequence variant" id="VAR_083921" description="In MRD63; slightly increased occipitofrontal circumference; slightly increased RAC1-mediated signaling; slightly increased neurite outgrowth; dbSNP:rs1747667518." evidence="19">
    <original>P</original>
    <variation>L</variation>
    <location>
        <position position="1461"/>
    </location>
</feature>
<feature type="sequence variant" id="VAR_077097" description="In MRD44; no effect on RAC1-mediated signaling; no effect on neurite outgrowth; dbSNP:rs879255627." evidence="18 19">
    <original>P</original>
    <variation>T</variation>
    <location>
        <position position="1461"/>
    </location>
</feature>
<feature type="sequence variant" id="VAR_083922" description="In MRD44; decreased activation of RAC1-mediated signaling; severely decreased neurite outgrowth; dbSNP:rs1554070777." evidence="19">
    <original>H</original>
    <variation>R</variation>
    <location>
        <position position="1469"/>
    </location>
</feature>
<feature type="sequence variant" id="VAR_059803" description="In dbSNP:rs16903474.">
    <original>A</original>
    <variation>T</variation>
    <location>
        <position position="1613"/>
    </location>
</feature>
<feature type="sequence variant" id="VAR_041900" description="In dbSNP:rs55687522." evidence="12">
    <original>T</original>
    <variation>M</variation>
    <location>
        <position position="1644"/>
    </location>
</feature>
<feature type="sequence variant" id="VAR_041901" description="In dbSNP:rs56292586." evidence="12">
    <original>H</original>
    <variation>R</variation>
    <location>
        <position position="1690"/>
    </location>
</feature>
<feature type="sequence variant" id="VAR_077098" description="In MRD44; uncertain significance." evidence="17">
    <original>A</original>
    <variation>T</variation>
    <location>
        <position position="1922"/>
    </location>
</feature>
<feature type="sequence variant" id="VAR_077099" description="In MRD44; uncertain significance." evidence="17">
    <original>S</original>
    <variation>N</variation>
    <location>
        <position position="1939"/>
    </location>
</feature>
<feature type="sequence variant" id="VAR_041902" description="In a metastatic melanoma sample; somatic mutation." evidence="12">
    <original>V</original>
    <variation>M</variation>
    <location>
        <position position="1978"/>
    </location>
</feature>
<feature type="sequence variant" id="VAR_077100" description="In MRD44; uncertain significance; dbSNP:rs771342869." evidence="17">
    <original>L</original>
    <variation>V</variation>
    <location>
        <position position="2201"/>
    </location>
</feature>
<feature type="sequence variant" id="VAR_041903" description="In dbSNP:rs55916212." evidence="12">
    <original>T</original>
    <variation>M</variation>
    <location>
        <position position="2242"/>
    </location>
</feature>
<feature type="sequence variant" id="VAR_077101" description="In MRD44; uncertain significance; dbSNP:rs1258664728." evidence="17">
    <original>E</original>
    <variation>D</variation>
    <location>
        <position position="2247"/>
    </location>
</feature>
<feature type="sequence variant" id="VAR_069372" description="Found in patient with severe intellectual disability; uncertain significance; dbSNP:rs751663099." evidence="16">
    <original>T</original>
    <variation>M</variation>
    <location>
        <position position="2563"/>
    </location>
</feature>
<feature type="sequence variant" id="VAR_077102" description="In MRD44; uncertain significance; dbSNP:rs768858988." evidence="17">
    <original>R</original>
    <variation>Q</variation>
    <location>
        <position position="2707"/>
    </location>
</feature>
<feature type="mutagenesis site" description="50% decrease in nucleotide exchange activity." evidence="21">
    <original>E</original>
    <variation>A</variation>
    <location>
        <position position="1299"/>
    </location>
</feature>
<feature type="mutagenesis site" description="40% decrease in nucleotide exchange activity." evidence="21">
    <original>T</original>
    <variation>A</variation>
    <location>
        <position position="1303"/>
    </location>
</feature>
<feature type="mutagenesis site" description="No change in nucleotide exchange activity." evidence="21">
    <original>N</original>
    <variation>A</variation>
    <location>
        <position position="1389"/>
    </location>
</feature>
<feature type="mutagenesis site" description="90% decrease in nucleotide exchange activity." evidence="21">
    <original>V</original>
    <variation>A</variation>
    <location>
        <position position="1426"/>
    </location>
</feature>
<feature type="mutagenesis site" description="80% decrease in nucleotide exchange activity." evidence="21">
    <original>Q</original>
    <variation>A</variation>
    <location>
        <position position="1427"/>
    </location>
</feature>
<feature type="mutagenesis site" description="80% decrease in nucleotide exchange activity." evidence="21">
    <original>R</original>
    <variation>A</variation>
    <location>
        <position position="1428"/>
    </location>
</feature>
<feature type="mutagenesis site" description="80% decrease in nucleotide exchange activity." evidence="21">
    <original>T</original>
    <variation>A</variation>
    <location>
        <position position="1430"/>
    </location>
</feature>
<feature type="mutagenesis site" description="Loss of nucleotide exchange activity." evidence="21">
    <original>K</original>
    <variation>A</variation>
    <location>
        <position position="1431"/>
    </location>
</feature>
<feature type="mutagenesis site" description="40% decrease in nucleotide exchange activity." evidence="21">
    <original>L</original>
    <variation>A</variation>
    <location>
        <position position="1434"/>
    </location>
</feature>
<feature type="mutagenesis site" description="No change in nucleotide exchange activity." evidence="21">
    <original>K</original>
    <variation>A</variation>
    <location>
        <position position="1437"/>
    </location>
</feature>
<feature type="mutagenesis site" description="30% decrease in nucleotide exchange activity." evidence="21">
    <original>E</original>
    <variation>A</variation>
    <location>
        <position position="1438"/>
    </location>
</feature>
<feature type="mutagenesis site" description="Expected to disrupt kinase activity. Causes reorganization of the actin cytoskeleton in the absence of NGF." evidence="14">
    <original>K</original>
    <variation>A</variation>
    <location>
        <position position="2917"/>
    </location>
</feature>
<feature type="sequence conflict" description="In Ref. 5; AAC34245 and 6; AAC43042." evidence="26" ref="5 6">
    <original>QLEN</original>
    <variation>HVRT</variation>
    <location>
        <begin position="550"/>
        <end position="553"/>
    </location>
</feature>
<feature type="sequence conflict" description="In Ref. 5; AAC34245 and 6; AAC43042." evidence="26" ref="5 6">
    <original>D</original>
    <variation>E</variation>
    <location>
        <position position="574"/>
    </location>
</feature>
<feature type="sequence conflict" description="In Ref. 5; AAC34245 and 6; AAC43042." evidence="26" ref="5 6">
    <original>QL</original>
    <variation>HV</variation>
    <location>
        <begin position="787"/>
        <end position="788"/>
    </location>
</feature>
<feature type="helix" evidence="31">
    <location>
        <begin position="1291"/>
        <end position="1316"/>
    </location>
</feature>
<feature type="helix" evidence="31">
    <location>
        <begin position="1318"/>
        <end position="1324"/>
    </location>
</feature>
<feature type="turn" evidence="31">
    <location>
        <begin position="1331"/>
        <end position="1335"/>
    </location>
</feature>
<feature type="helix" evidence="31">
    <location>
        <begin position="1337"/>
        <end position="1341"/>
    </location>
</feature>
<feature type="helix" evidence="31">
    <location>
        <begin position="1344"/>
        <end position="1353"/>
    </location>
</feature>
<feature type="helix" evidence="31">
    <location>
        <begin position="1355"/>
        <end position="1361"/>
    </location>
</feature>
<feature type="turn" evidence="31">
    <location>
        <begin position="1362"/>
        <end position="1364"/>
    </location>
</feature>
<feature type="helix" evidence="31">
    <location>
        <begin position="1366"/>
        <end position="1369"/>
    </location>
</feature>
<feature type="helix" evidence="31">
    <location>
        <begin position="1370"/>
        <end position="1375"/>
    </location>
</feature>
<feature type="turn" evidence="31">
    <location>
        <begin position="1376"/>
        <end position="1380"/>
    </location>
</feature>
<feature type="helix" evidence="31">
    <location>
        <begin position="1381"/>
        <end position="1400"/>
    </location>
</feature>
<feature type="turn" evidence="31">
    <location>
        <begin position="1401"/>
        <end position="1403"/>
    </location>
</feature>
<feature type="helix" evidence="31">
    <location>
        <begin position="1404"/>
        <end position="1412"/>
    </location>
</feature>
<feature type="helix" evidence="31">
    <location>
        <begin position="1418"/>
        <end position="1422"/>
    </location>
</feature>
<feature type="helix" evidence="31">
    <location>
        <begin position="1424"/>
        <end position="1441"/>
    </location>
</feature>
<feature type="helix" evidence="31">
    <location>
        <begin position="1450"/>
        <end position="1470"/>
    </location>
</feature>
<feature type="strand" evidence="31">
    <location>
        <begin position="1473"/>
        <end position="1475"/>
    </location>
</feature>
<feature type="helix" evidence="31">
    <location>
        <begin position="1481"/>
        <end position="1483"/>
    </location>
</feature>
<feature type="strand" evidence="31">
    <location>
        <begin position="1486"/>
        <end position="1495"/>
    </location>
</feature>
<feature type="strand" evidence="31">
    <location>
        <begin position="1497"/>
        <end position="1501"/>
    </location>
</feature>
<feature type="strand" evidence="31">
    <location>
        <begin position="1504"/>
        <end position="1523"/>
    </location>
</feature>
<feature type="strand" evidence="31">
    <location>
        <begin position="1529"/>
        <end position="1538"/>
    </location>
</feature>
<feature type="helix" evidence="31">
    <location>
        <begin position="1539"/>
        <end position="1541"/>
    </location>
</feature>
<feature type="strand" evidence="31">
    <location>
        <begin position="1542"/>
        <end position="1545"/>
    </location>
</feature>
<feature type="strand" evidence="32">
    <location>
        <begin position="1549"/>
        <end position="1552"/>
    </location>
</feature>
<feature type="strand" evidence="31">
    <location>
        <begin position="1554"/>
        <end position="1562"/>
    </location>
</feature>
<feature type="turn" evidence="31">
    <location>
        <begin position="1565"/>
        <end position="1567"/>
    </location>
</feature>
<feature type="strand" evidence="31">
    <location>
        <begin position="1569"/>
        <end position="1572"/>
    </location>
</feature>
<feature type="helix" evidence="31">
    <location>
        <begin position="1576"/>
        <end position="1592"/>
    </location>
</feature>
<feature type="helix" evidence="33">
    <location>
        <begin position="1968"/>
        <end position="1992"/>
    </location>
</feature>
<feature type="helix" evidence="33">
    <location>
        <begin position="1995"/>
        <end position="2002"/>
    </location>
</feature>
<feature type="helix" evidence="33">
    <location>
        <begin position="2006"/>
        <end position="2008"/>
    </location>
</feature>
<feature type="turn" evidence="33">
    <location>
        <begin position="2009"/>
        <end position="2011"/>
    </location>
</feature>
<feature type="helix" evidence="33">
    <location>
        <begin position="2012"/>
        <end position="2016"/>
    </location>
</feature>
<feature type="helix" evidence="33">
    <location>
        <begin position="2019"/>
        <end position="2028"/>
    </location>
</feature>
<feature type="helix" evidence="33">
    <location>
        <begin position="2030"/>
        <end position="2035"/>
    </location>
</feature>
<feature type="helix" evidence="33">
    <location>
        <begin position="2036"/>
        <end position="2038"/>
    </location>
</feature>
<feature type="helix" evidence="33">
    <location>
        <begin position="2043"/>
        <end position="2050"/>
    </location>
</feature>
<feature type="turn" evidence="33">
    <location>
        <begin position="2051"/>
        <end position="2053"/>
    </location>
</feature>
<feature type="helix" evidence="33">
    <location>
        <begin position="2054"/>
        <end position="2056"/>
    </location>
</feature>
<feature type="helix" evidence="33">
    <location>
        <begin position="2057"/>
        <end position="2075"/>
    </location>
</feature>
<feature type="turn" evidence="33">
    <location>
        <begin position="2076"/>
        <end position="2078"/>
    </location>
</feature>
<feature type="helix" evidence="33">
    <location>
        <begin position="2079"/>
        <end position="2087"/>
    </location>
</feature>
<feature type="helix" evidence="33">
    <location>
        <begin position="2093"/>
        <end position="2120"/>
    </location>
</feature>
<feature type="helix" evidence="33">
    <location>
        <begin position="2126"/>
        <end position="2148"/>
    </location>
</feature>
<feature type="strand" evidence="33">
    <location>
        <begin position="2151"/>
        <end position="2153"/>
    </location>
</feature>
<feature type="helix" evidence="33">
    <location>
        <begin position="2159"/>
        <end position="2161"/>
    </location>
</feature>
<feature type="strand" evidence="33">
    <location>
        <begin position="2164"/>
        <end position="2173"/>
    </location>
</feature>
<feature type="strand" evidence="33">
    <location>
        <begin position="2184"/>
        <end position="2200"/>
    </location>
</feature>
<feature type="strand" evidence="33">
    <location>
        <begin position="2212"/>
        <end position="2219"/>
    </location>
</feature>
<feature type="helix" evidence="33">
    <location>
        <begin position="2220"/>
        <end position="2222"/>
    </location>
</feature>
<feature type="strand" evidence="33">
    <location>
        <begin position="2223"/>
        <end position="2226"/>
    </location>
</feature>
<feature type="strand" evidence="33">
    <location>
        <begin position="2235"/>
        <end position="2242"/>
    </location>
</feature>
<feature type="strand" evidence="33">
    <location>
        <begin position="2245"/>
        <end position="2252"/>
    </location>
</feature>
<feature type="helix" evidence="33">
    <location>
        <begin position="2256"/>
        <end position="2270"/>
    </location>
</feature>
<protein>
    <recommendedName>
        <fullName>Triple functional domain protein</fullName>
        <ecNumber>2.7.11.1</ecNumber>
    </recommendedName>
    <alternativeName>
        <fullName>PTPRF-interacting protein</fullName>
    </alternativeName>
</protein>
<dbReference type="EC" id="2.7.11.1"/>
<dbReference type="EMBL" id="AK131423">
    <property type="protein sequence ID" value="BAD18570.1"/>
    <property type="molecule type" value="mRNA"/>
</dbReference>
<dbReference type="EMBL" id="AC010419">
    <property type="status" value="NOT_ANNOTATED_CDS"/>
    <property type="molecule type" value="Genomic_DNA"/>
</dbReference>
<dbReference type="EMBL" id="AC016549">
    <property type="status" value="NOT_ANNOTATED_CDS"/>
    <property type="molecule type" value="Genomic_DNA"/>
</dbReference>
<dbReference type="EMBL" id="AC016654">
    <property type="status" value="NOT_ANNOTATED_CDS"/>
    <property type="molecule type" value="Genomic_DNA"/>
</dbReference>
<dbReference type="EMBL" id="AC016656">
    <property type="status" value="NOT_ANNOTATED_CDS"/>
    <property type="molecule type" value="Genomic_DNA"/>
</dbReference>
<dbReference type="EMBL" id="AC026456">
    <property type="status" value="NOT_ANNOTATED_CDS"/>
    <property type="molecule type" value="Genomic_DNA"/>
</dbReference>
<dbReference type="EMBL" id="CH471102">
    <property type="protein sequence ID" value="EAX08047.1"/>
    <property type="molecule type" value="Genomic_DNA"/>
</dbReference>
<dbReference type="EMBL" id="CH471102">
    <property type="protein sequence ID" value="EAX08048.1"/>
    <property type="molecule type" value="Genomic_DNA"/>
</dbReference>
<dbReference type="EMBL" id="BC035585">
    <property type="protein sequence ID" value="AAH35585.1"/>
    <property type="molecule type" value="mRNA"/>
</dbReference>
<dbReference type="EMBL" id="BC017268">
    <property type="protein sequence ID" value="AAH17268.1"/>
    <property type="molecule type" value="mRNA"/>
</dbReference>
<dbReference type="EMBL" id="U42390">
    <property type="protein sequence ID" value="AAC34245.1"/>
    <property type="status" value="ALT_SEQ"/>
    <property type="molecule type" value="mRNA"/>
</dbReference>
<dbReference type="EMBL" id="AF091395">
    <property type="protein sequence ID" value="AAC43042.1"/>
    <property type="status" value="ALT_INIT"/>
    <property type="molecule type" value="mRNA"/>
</dbReference>
<dbReference type="EMBL" id="AB209754">
    <property type="protein sequence ID" value="BAD92991.1"/>
    <property type="molecule type" value="mRNA"/>
</dbReference>
<dbReference type="CCDS" id="CCDS3883.1">
    <molecule id="O75962-1"/>
</dbReference>
<dbReference type="RefSeq" id="NP_009049.2">
    <molecule id="O75962-1"/>
    <property type="nucleotide sequence ID" value="NM_007118.3"/>
</dbReference>
<dbReference type="RefSeq" id="XP_011512412.1">
    <molecule id="O75962-4"/>
    <property type="nucleotide sequence ID" value="XM_011514110.4"/>
</dbReference>
<dbReference type="RefSeq" id="XP_054209364.1">
    <molecule id="O75962-4"/>
    <property type="nucleotide sequence ID" value="XM_054353389.1"/>
</dbReference>
<dbReference type="PDB" id="1NTY">
    <property type="method" value="X-ray"/>
    <property type="resolution" value="1.70 A"/>
    <property type="chains" value="A=1284-1594"/>
</dbReference>
<dbReference type="PDB" id="2NZ8">
    <property type="method" value="X-ray"/>
    <property type="resolution" value="2.00 A"/>
    <property type="chains" value="B=1285-1594"/>
</dbReference>
<dbReference type="PDB" id="6D8Z">
    <property type="method" value="X-ray"/>
    <property type="resolution" value="2.65 A"/>
    <property type="chains" value="A/B/C=1960-2275"/>
</dbReference>
<dbReference type="PDB" id="7SJ4">
    <property type="method" value="EM"/>
    <property type="resolution" value="2.86 A"/>
    <property type="chains" value="A=1284-1959"/>
</dbReference>
<dbReference type="PDBsum" id="1NTY"/>
<dbReference type="PDBsum" id="2NZ8"/>
<dbReference type="PDBsum" id="6D8Z"/>
<dbReference type="PDBsum" id="7SJ4"/>
<dbReference type="EMDB" id="EMD-25153"/>
<dbReference type="SMR" id="O75962"/>
<dbReference type="BioGRID" id="113055">
    <property type="interactions" value="104"/>
</dbReference>
<dbReference type="DIP" id="DIP-37578N"/>
<dbReference type="FunCoup" id="O75962">
    <property type="interactions" value="1304"/>
</dbReference>
<dbReference type="IntAct" id="O75962">
    <property type="interactions" value="50"/>
</dbReference>
<dbReference type="MINT" id="O75962"/>
<dbReference type="STRING" id="9606.ENSP00000339299"/>
<dbReference type="ChEMBL" id="CHEMBL4523153"/>
<dbReference type="GlyGen" id="O75962">
    <property type="glycosylation" value="1 site, 1 O-linked glycan (1 site)"/>
</dbReference>
<dbReference type="iPTMnet" id="O75962"/>
<dbReference type="PhosphoSitePlus" id="O75962"/>
<dbReference type="BioMuta" id="TRIO"/>
<dbReference type="jPOST" id="O75962"/>
<dbReference type="MassIVE" id="O75962"/>
<dbReference type="PaxDb" id="9606-ENSP00000339299"/>
<dbReference type="PeptideAtlas" id="O75962"/>
<dbReference type="ProteomicsDB" id="50323">
    <molecule id="O75962-1"/>
</dbReference>
<dbReference type="ProteomicsDB" id="50324">
    <molecule id="O75962-2"/>
</dbReference>
<dbReference type="ProteomicsDB" id="50325">
    <molecule id="O75962-3"/>
</dbReference>
<dbReference type="ProteomicsDB" id="50326">
    <molecule id="O75962-4"/>
</dbReference>
<dbReference type="ProteomicsDB" id="50327">
    <molecule id="O75962-5"/>
</dbReference>
<dbReference type="Pumba" id="O75962"/>
<dbReference type="ABCD" id="O75962">
    <property type="antibodies" value="4 sequenced antibodies"/>
</dbReference>
<dbReference type="Antibodypedia" id="2116">
    <property type="antibodies" value="77 antibodies from 19 providers"/>
</dbReference>
<dbReference type="DNASU" id="7204"/>
<dbReference type="Ensembl" id="ENST00000344204.9">
    <molecule id="O75962-1"/>
    <property type="protein sequence ID" value="ENSP00000339299.4"/>
    <property type="gene ID" value="ENSG00000038382.23"/>
</dbReference>
<dbReference type="GeneID" id="7204"/>
<dbReference type="KEGG" id="hsa:7204"/>
<dbReference type="MANE-Select" id="ENST00000344204.9">
    <property type="protein sequence ID" value="ENSP00000339299.4"/>
    <property type="RefSeq nucleotide sequence ID" value="NM_007118.4"/>
    <property type="RefSeq protein sequence ID" value="NP_009049.2"/>
</dbReference>
<dbReference type="UCSC" id="uc003jff.4">
    <molecule id="O75962-1"/>
    <property type="organism name" value="human"/>
</dbReference>
<dbReference type="AGR" id="HGNC:12303"/>
<dbReference type="CTD" id="7204"/>
<dbReference type="DisGeNET" id="7204"/>
<dbReference type="GeneCards" id="TRIO"/>
<dbReference type="GeneReviews" id="TRIO"/>
<dbReference type="HGNC" id="HGNC:12303">
    <property type="gene designation" value="TRIO"/>
</dbReference>
<dbReference type="HPA" id="ENSG00000038382">
    <property type="expression patterns" value="Low tissue specificity"/>
</dbReference>
<dbReference type="MalaCards" id="TRIO"/>
<dbReference type="MIM" id="601893">
    <property type="type" value="gene"/>
</dbReference>
<dbReference type="MIM" id="617061">
    <property type="type" value="phenotype"/>
</dbReference>
<dbReference type="MIM" id="618825">
    <property type="type" value="phenotype"/>
</dbReference>
<dbReference type="neXtProt" id="NX_O75962"/>
<dbReference type="OpenTargets" id="ENSG00000038382"/>
<dbReference type="Orphanet" id="476126">
    <property type="disease" value="Micrognathia-recurrent infections-behavioral abnormalities-mild intellectual disability syndrome"/>
</dbReference>
<dbReference type="PharmGKB" id="PA36982"/>
<dbReference type="VEuPathDB" id="HostDB:ENSG00000038382"/>
<dbReference type="eggNOG" id="KOG0032">
    <property type="taxonomic scope" value="Eukaryota"/>
</dbReference>
<dbReference type="eggNOG" id="KOG4240">
    <property type="taxonomic scope" value="Eukaryota"/>
</dbReference>
<dbReference type="GeneTree" id="ENSGT00940000154766"/>
<dbReference type="HOGENOM" id="CLU_000288_76_3_1"/>
<dbReference type="InParanoid" id="O75962"/>
<dbReference type="OMA" id="IRYLHNC"/>
<dbReference type="OrthoDB" id="10256089at2759"/>
<dbReference type="PAN-GO" id="O75962">
    <property type="GO annotations" value="4 GO annotations based on evolutionary models"/>
</dbReference>
<dbReference type="PhylomeDB" id="O75962"/>
<dbReference type="TreeFam" id="TF318080"/>
<dbReference type="PathwayCommons" id="O75962"/>
<dbReference type="Reactome" id="R-HSA-193648">
    <property type="pathway name" value="NRAGE signals death through JNK"/>
</dbReference>
<dbReference type="Reactome" id="R-HSA-416476">
    <property type="pathway name" value="G alpha (q) signalling events"/>
</dbReference>
<dbReference type="Reactome" id="R-HSA-416482">
    <property type="pathway name" value="G alpha (12/13) signalling events"/>
</dbReference>
<dbReference type="Reactome" id="R-HSA-418885">
    <property type="pathway name" value="DCC mediated attractive signaling"/>
</dbReference>
<dbReference type="Reactome" id="R-HSA-8980692">
    <property type="pathway name" value="RHOA GTPase cycle"/>
</dbReference>
<dbReference type="Reactome" id="R-HSA-9013148">
    <property type="pathway name" value="CDC42 GTPase cycle"/>
</dbReference>
<dbReference type="Reactome" id="R-HSA-9013149">
    <property type="pathway name" value="RAC1 GTPase cycle"/>
</dbReference>
<dbReference type="Reactome" id="R-HSA-9013404">
    <property type="pathway name" value="RAC2 GTPase cycle"/>
</dbReference>
<dbReference type="Reactome" id="R-HSA-9013408">
    <property type="pathway name" value="RHOG GTPase cycle"/>
</dbReference>
<dbReference type="Reactome" id="R-HSA-9013409">
    <property type="pathway name" value="RHOJ GTPase cycle"/>
</dbReference>
<dbReference type="Reactome" id="R-HSA-9013423">
    <property type="pathway name" value="RAC3 GTPase cycle"/>
</dbReference>
<dbReference type="SignaLink" id="O75962"/>
<dbReference type="SIGNOR" id="O75962"/>
<dbReference type="BioGRID-ORCS" id="7204">
    <property type="hits" value="36 hits in 1183 CRISPR screens"/>
</dbReference>
<dbReference type="CD-CODE" id="FB4E32DD">
    <property type="entry name" value="Presynaptic clusters and postsynaptic densities"/>
</dbReference>
<dbReference type="ChiTaRS" id="TRIO">
    <property type="organism name" value="human"/>
</dbReference>
<dbReference type="EvolutionaryTrace" id="O75962"/>
<dbReference type="GeneWiki" id="TRIO_(gene)"/>
<dbReference type="GenomeRNAi" id="7204"/>
<dbReference type="Pharos" id="O75962">
    <property type="development level" value="Tbio"/>
</dbReference>
<dbReference type="PRO" id="PR:O75962"/>
<dbReference type="Proteomes" id="UP000005640">
    <property type="component" value="Chromosome 5"/>
</dbReference>
<dbReference type="RNAct" id="O75962">
    <property type="molecule type" value="protein"/>
</dbReference>
<dbReference type="Bgee" id="ENSG00000038382">
    <property type="expression patterns" value="Expressed in sural nerve and 197 other cell types or tissues"/>
</dbReference>
<dbReference type="ExpressionAtlas" id="O75962">
    <property type="expression patterns" value="baseline and differential"/>
</dbReference>
<dbReference type="GO" id="GO:0042995">
    <property type="term" value="C:cell projection"/>
    <property type="evidence" value="ECO:0007669"/>
    <property type="project" value="UniProtKB-SubCell"/>
</dbReference>
<dbReference type="GO" id="GO:0005737">
    <property type="term" value="C:cytoplasm"/>
    <property type="evidence" value="ECO:0000318"/>
    <property type="project" value="GO_Central"/>
</dbReference>
<dbReference type="GO" id="GO:0005829">
    <property type="term" value="C:cytosol"/>
    <property type="evidence" value="ECO:0000304"/>
    <property type="project" value="Reactome"/>
</dbReference>
<dbReference type="GO" id="GO:0019898">
    <property type="term" value="C:extrinsic component of membrane"/>
    <property type="evidence" value="ECO:0000318"/>
    <property type="project" value="GO_Central"/>
</dbReference>
<dbReference type="GO" id="GO:0098978">
    <property type="term" value="C:glutamatergic synapse"/>
    <property type="evidence" value="ECO:0000314"/>
    <property type="project" value="SynGO"/>
</dbReference>
<dbReference type="GO" id="GO:0098794">
    <property type="term" value="C:postsynapse"/>
    <property type="evidence" value="ECO:0007669"/>
    <property type="project" value="GOC"/>
</dbReference>
<dbReference type="GO" id="GO:0048786">
    <property type="term" value="C:presynaptic active zone"/>
    <property type="evidence" value="ECO:0000314"/>
    <property type="project" value="SynGO"/>
</dbReference>
<dbReference type="GO" id="GO:0005524">
    <property type="term" value="F:ATP binding"/>
    <property type="evidence" value="ECO:0007669"/>
    <property type="project" value="UniProtKB-KW"/>
</dbReference>
<dbReference type="GO" id="GO:0005085">
    <property type="term" value="F:guanyl-nucleotide exchange factor activity"/>
    <property type="evidence" value="ECO:0000318"/>
    <property type="project" value="GO_Central"/>
</dbReference>
<dbReference type="GO" id="GO:0106310">
    <property type="term" value="F:protein serine kinase activity"/>
    <property type="evidence" value="ECO:0007669"/>
    <property type="project" value="RHEA"/>
</dbReference>
<dbReference type="GO" id="GO:0004674">
    <property type="term" value="F:protein serine/threonine kinase activity"/>
    <property type="evidence" value="ECO:0000304"/>
    <property type="project" value="ProtInc"/>
</dbReference>
<dbReference type="GO" id="GO:0007411">
    <property type="term" value="P:axon guidance"/>
    <property type="evidence" value="ECO:0000318"/>
    <property type="project" value="GO_Central"/>
</dbReference>
<dbReference type="GO" id="GO:0007185">
    <property type="term" value="P:cell surface receptor protein tyrosine phosphatase signaling pathway"/>
    <property type="evidence" value="ECO:0000304"/>
    <property type="project" value="ProtInc"/>
</dbReference>
<dbReference type="GO" id="GO:0045599">
    <property type="term" value="P:negative regulation of fat cell differentiation"/>
    <property type="evidence" value="ECO:0000250"/>
    <property type="project" value="UniProtKB"/>
</dbReference>
<dbReference type="GO" id="GO:0048812">
    <property type="term" value="P:neuron projection morphogenesis"/>
    <property type="evidence" value="ECO:0000315"/>
    <property type="project" value="UniProtKB"/>
</dbReference>
<dbReference type="GO" id="GO:0099170">
    <property type="term" value="P:postsynaptic modulation of chemical synaptic transmission"/>
    <property type="evidence" value="ECO:0000314"/>
    <property type="project" value="SynGO"/>
</dbReference>
<dbReference type="GO" id="GO:0051056">
    <property type="term" value="P:regulation of small GTPase mediated signal transduction"/>
    <property type="evidence" value="ECO:0000304"/>
    <property type="project" value="Reactome"/>
</dbReference>
<dbReference type="CDD" id="cd13240">
    <property type="entry name" value="PH1_Kalirin_Trio_like"/>
    <property type="match status" value="1"/>
</dbReference>
<dbReference type="CDD" id="cd13241">
    <property type="entry name" value="PH2_Kalirin_Trio_p63RhoGEF"/>
    <property type="match status" value="1"/>
</dbReference>
<dbReference type="CDD" id="cd00160">
    <property type="entry name" value="RhoGEF"/>
    <property type="match status" value="2"/>
</dbReference>
<dbReference type="CDD" id="cd00170">
    <property type="entry name" value="SEC14"/>
    <property type="match status" value="1"/>
</dbReference>
<dbReference type="CDD" id="cd11852">
    <property type="entry name" value="SH3_Kalirin_1"/>
    <property type="match status" value="1"/>
</dbReference>
<dbReference type="CDD" id="cd11853">
    <property type="entry name" value="SH3_Kalirin_2"/>
    <property type="match status" value="1"/>
</dbReference>
<dbReference type="CDD" id="cd00176">
    <property type="entry name" value="SPEC"/>
    <property type="match status" value="6"/>
</dbReference>
<dbReference type="CDD" id="cd14113">
    <property type="entry name" value="STKc_Trio_C"/>
    <property type="match status" value="1"/>
</dbReference>
<dbReference type="DisProt" id="DP02977"/>
<dbReference type="FunFam" id="1.20.900.10:FF:000001">
    <property type="entry name" value="Guanine nucleotide exchange factor DBS"/>
    <property type="match status" value="1"/>
</dbReference>
<dbReference type="FunFam" id="1.10.510.10:FF:000152">
    <property type="entry name" value="kalirin isoform X1"/>
    <property type="match status" value="1"/>
</dbReference>
<dbReference type="FunFam" id="2.30.29.30:FF:000091">
    <property type="entry name" value="kalirin isoform X1"/>
    <property type="match status" value="1"/>
</dbReference>
<dbReference type="FunFam" id="2.30.30.40:FF:000038">
    <property type="entry name" value="kalirin isoform X1"/>
    <property type="match status" value="1"/>
</dbReference>
<dbReference type="FunFam" id="2.30.30.40:FF:000040">
    <property type="entry name" value="kalirin isoform X1"/>
    <property type="match status" value="1"/>
</dbReference>
<dbReference type="FunFam" id="2.60.40.10:FF:000368">
    <property type="entry name" value="kalirin isoform X1"/>
    <property type="match status" value="1"/>
</dbReference>
<dbReference type="FunFam" id="3.30.200.20:FF:000169">
    <property type="entry name" value="kalirin isoform X1"/>
    <property type="match status" value="1"/>
</dbReference>
<dbReference type="FunFam" id="1.20.58.60:FF:000034">
    <property type="entry name" value="kalirin isoform X2"/>
    <property type="match status" value="1"/>
</dbReference>
<dbReference type="FunFam" id="3.40.525.10:FF:000003">
    <property type="entry name" value="kalirin isoform X2"/>
    <property type="match status" value="1"/>
</dbReference>
<dbReference type="FunFam" id="1.20.58.60:FF:000024">
    <property type="entry name" value="Kalirin RhoGEF kinase a"/>
    <property type="match status" value="1"/>
</dbReference>
<dbReference type="FunFam" id="1.20.58.60:FF:000023">
    <property type="entry name" value="Kalirin RhoGEF kinase b"/>
    <property type="match status" value="1"/>
</dbReference>
<dbReference type="FunFam" id="1.20.58.60:FF:000032">
    <property type="entry name" value="Kalirin RhoGEF kinase b"/>
    <property type="match status" value="1"/>
</dbReference>
<dbReference type="FunFam" id="2.30.29.30:FF:000040">
    <property type="entry name" value="Kalirin RhoGEF kinase b"/>
    <property type="match status" value="1"/>
</dbReference>
<dbReference type="FunFam" id="1.20.900.10:FF:000008">
    <property type="entry name" value="rho guanine nucleotide exchange factor 25"/>
    <property type="match status" value="1"/>
</dbReference>
<dbReference type="FunFam" id="1.20.58.60:FF:000015">
    <property type="entry name" value="triple functional domain protein-like"/>
    <property type="match status" value="1"/>
</dbReference>
<dbReference type="Gene3D" id="1.20.58.60">
    <property type="match status" value="5"/>
</dbReference>
<dbReference type="Gene3D" id="3.40.525.10">
    <property type="entry name" value="CRAL-TRIO lipid binding domain"/>
    <property type="match status" value="1"/>
</dbReference>
<dbReference type="Gene3D" id="1.20.900.10">
    <property type="entry name" value="Dbl homology (DH) domain"/>
    <property type="match status" value="2"/>
</dbReference>
<dbReference type="Gene3D" id="2.60.40.10">
    <property type="entry name" value="Immunoglobulins"/>
    <property type="match status" value="1"/>
</dbReference>
<dbReference type="Gene3D" id="3.30.200.20">
    <property type="entry name" value="Phosphorylase Kinase, domain 1"/>
    <property type="match status" value="1"/>
</dbReference>
<dbReference type="Gene3D" id="2.30.29.30">
    <property type="entry name" value="Pleckstrin-homology domain (PH domain)/Phosphotyrosine-binding domain (PTB)"/>
    <property type="match status" value="2"/>
</dbReference>
<dbReference type="Gene3D" id="2.30.30.40">
    <property type="entry name" value="SH3 Domains"/>
    <property type="match status" value="2"/>
</dbReference>
<dbReference type="Gene3D" id="1.10.510.10">
    <property type="entry name" value="Transferase(Phosphotransferase) domain 1"/>
    <property type="match status" value="1"/>
</dbReference>
<dbReference type="InterPro" id="IPR001251">
    <property type="entry name" value="CRAL-TRIO_dom"/>
</dbReference>
<dbReference type="InterPro" id="IPR036865">
    <property type="entry name" value="CRAL-TRIO_dom_sf"/>
</dbReference>
<dbReference type="InterPro" id="IPR035899">
    <property type="entry name" value="DBL_dom_sf"/>
</dbReference>
<dbReference type="InterPro" id="IPR000219">
    <property type="entry name" value="DH_dom"/>
</dbReference>
<dbReference type="InterPro" id="IPR007110">
    <property type="entry name" value="Ig-like_dom"/>
</dbReference>
<dbReference type="InterPro" id="IPR036179">
    <property type="entry name" value="Ig-like_dom_sf"/>
</dbReference>
<dbReference type="InterPro" id="IPR013783">
    <property type="entry name" value="Ig-like_fold"/>
</dbReference>
<dbReference type="InterPro" id="IPR013098">
    <property type="entry name" value="Ig_I-set"/>
</dbReference>
<dbReference type="InterPro" id="IPR003599">
    <property type="entry name" value="Ig_sub"/>
</dbReference>
<dbReference type="InterPro" id="IPR003598">
    <property type="entry name" value="Ig_sub2"/>
</dbReference>
<dbReference type="InterPro" id="IPR047054">
    <property type="entry name" value="Kalirin_TRIO_PH_1"/>
</dbReference>
<dbReference type="InterPro" id="IPR028570">
    <property type="entry name" value="Kalirin_TRIO_SH3_1"/>
</dbReference>
<dbReference type="InterPro" id="IPR047053">
    <property type="entry name" value="Kalirin_TRIO_SH3_2"/>
</dbReference>
<dbReference type="InterPro" id="IPR011009">
    <property type="entry name" value="Kinase-like_dom_sf"/>
</dbReference>
<dbReference type="InterPro" id="IPR011993">
    <property type="entry name" value="PH-like_dom_sf"/>
</dbReference>
<dbReference type="InterPro" id="IPR001849">
    <property type="entry name" value="PH_domain"/>
</dbReference>
<dbReference type="InterPro" id="IPR000719">
    <property type="entry name" value="Prot_kinase_dom"/>
</dbReference>
<dbReference type="InterPro" id="IPR051336">
    <property type="entry name" value="RhoGEF_Guanine_NuclExch_SF"/>
</dbReference>
<dbReference type="InterPro" id="IPR008271">
    <property type="entry name" value="Ser/Thr_kinase_AS"/>
</dbReference>
<dbReference type="InterPro" id="IPR036028">
    <property type="entry name" value="SH3-like_dom_sf"/>
</dbReference>
<dbReference type="InterPro" id="IPR001452">
    <property type="entry name" value="SH3_domain"/>
</dbReference>
<dbReference type="InterPro" id="IPR055251">
    <property type="entry name" value="SOS1_NGEF_PH"/>
</dbReference>
<dbReference type="InterPro" id="IPR018159">
    <property type="entry name" value="Spectrin/alpha-actinin"/>
</dbReference>
<dbReference type="InterPro" id="IPR002017">
    <property type="entry name" value="Spectrin_repeat"/>
</dbReference>
<dbReference type="PANTHER" id="PTHR22826">
    <property type="entry name" value="RHO GUANINE EXCHANGE FACTOR-RELATED"/>
    <property type="match status" value="1"/>
</dbReference>
<dbReference type="PANTHER" id="PTHR22826:SF106">
    <property type="entry name" value="TRIO, ISOFORM A"/>
    <property type="match status" value="1"/>
</dbReference>
<dbReference type="Pfam" id="PF13716">
    <property type="entry name" value="CRAL_TRIO_2"/>
    <property type="match status" value="1"/>
</dbReference>
<dbReference type="Pfam" id="PF07679">
    <property type="entry name" value="I-set"/>
    <property type="match status" value="1"/>
</dbReference>
<dbReference type="Pfam" id="PF00069">
    <property type="entry name" value="Pkinase"/>
    <property type="match status" value="1"/>
</dbReference>
<dbReference type="Pfam" id="PF00621">
    <property type="entry name" value="RhoGEF"/>
    <property type="match status" value="2"/>
</dbReference>
<dbReference type="Pfam" id="PF16609">
    <property type="entry name" value="SH3-RhoG_link"/>
    <property type="match status" value="1"/>
</dbReference>
<dbReference type="Pfam" id="PF00018">
    <property type="entry name" value="SH3_1"/>
    <property type="match status" value="1"/>
</dbReference>
<dbReference type="Pfam" id="PF23587">
    <property type="entry name" value="SH3_KALRN"/>
    <property type="match status" value="1"/>
</dbReference>
<dbReference type="Pfam" id="PF22697">
    <property type="entry name" value="SOS1_NGEF_PH"/>
    <property type="match status" value="2"/>
</dbReference>
<dbReference type="Pfam" id="PF00435">
    <property type="entry name" value="Spectrin"/>
    <property type="match status" value="4"/>
</dbReference>
<dbReference type="Pfam" id="PF23323">
    <property type="entry name" value="Spectrin_6"/>
    <property type="match status" value="1"/>
</dbReference>
<dbReference type="SMART" id="SM00409">
    <property type="entry name" value="IG"/>
    <property type="match status" value="1"/>
</dbReference>
<dbReference type="SMART" id="SM00408">
    <property type="entry name" value="IGc2"/>
    <property type="match status" value="1"/>
</dbReference>
<dbReference type="SMART" id="SM00233">
    <property type="entry name" value="PH"/>
    <property type="match status" value="2"/>
</dbReference>
<dbReference type="SMART" id="SM00325">
    <property type="entry name" value="RhoGEF"/>
    <property type="match status" value="2"/>
</dbReference>
<dbReference type="SMART" id="SM00220">
    <property type="entry name" value="S_TKc"/>
    <property type="match status" value="1"/>
</dbReference>
<dbReference type="SMART" id="SM00516">
    <property type="entry name" value="SEC14"/>
    <property type="match status" value="1"/>
</dbReference>
<dbReference type="SMART" id="SM00326">
    <property type="entry name" value="SH3"/>
    <property type="match status" value="2"/>
</dbReference>
<dbReference type="SMART" id="SM00150">
    <property type="entry name" value="SPEC"/>
    <property type="match status" value="6"/>
</dbReference>
<dbReference type="SUPFAM" id="SSF52087">
    <property type="entry name" value="CRAL/TRIO domain"/>
    <property type="match status" value="1"/>
</dbReference>
<dbReference type="SUPFAM" id="SSF48065">
    <property type="entry name" value="DBL homology domain (DH-domain)"/>
    <property type="match status" value="2"/>
</dbReference>
<dbReference type="SUPFAM" id="SSF48726">
    <property type="entry name" value="Immunoglobulin"/>
    <property type="match status" value="1"/>
</dbReference>
<dbReference type="SUPFAM" id="SSF50729">
    <property type="entry name" value="PH domain-like"/>
    <property type="match status" value="2"/>
</dbReference>
<dbReference type="SUPFAM" id="SSF56112">
    <property type="entry name" value="Protein kinase-like (PK-like)"/>
    <property type="match status" value="1"/>
</dbReference>
<dbReference type="SUPFAM" id="SSF50044">
    <property type="entry name" value="SH3-domain"/>
    <property type="match status" value="2"/>
</dbReference>
<dbReference type="SUPFAM" id="SSF46966">
    <property type="entry name" value="Spectrin repeat"/>
    <property type="match status" value="6"/>
</dbReference>
<dbReference type="PROSITE" id="PS50191">
    <property type="entry name" value="CRAL_TRIO"/>
    <property type="match status" value="1"/>
</dbReference>
<dbReference type="PROSITE" id="PS50010">
    <property type="entry name" value="DH_2"/>
    <property type="match status" value="2"/>
</dbReference>
<dbReference type="PROSITE" id="PS50835">
    <property type="entry name" value="IG_LIKE"/>
    <property type="match status" value="1"/>
</dbReference>
<dbReference type="PROSITE" id="PS50003">
    <property type="entry name" value="PH_DOMAIN"/>
    <property type="match status" value="2"/>
</dbReference>
<dbReference type="PROSITE" id="PS50011">
    <property type="entry name" value="PROTEIN_KINASE_DOM"/>
    <property type="match status" value="1"/>
</dbReference>
<dbReference type="PROSITE" id="PS00108">
    <property type="entry name" value="PROTEIN_KINASE_ST"/>
    <property type="match status" value="1"/>
</dbReference>
<dbReference type="PROSITE" id="PS50002">
    <property type="entry name" value="SH3"/>
    <property type="match status" value="2"/>
</dbReference>